<accession>P0A7U3</accession>
<accession>P02375</accession>
<accession>Q2M6Y1</accession>
<dbReference type="EMBL" id="X02613">
    <property type="protein sequence ID" value="CAA26464.1"/>
    <property type="molecule type" value="Genomic_DNA"/>
</dbReference>
<dbReference type="EMBL" id="U18997">
    <property type="protein sequence ID" value="AAA58113.1"/>
    <property type="molecule type" value="Genomic_DNA"/>
</dbReference>
<dbReference type="EMBL" id="U00096">
    <property type="protein sequence ID" value="AAC76341.1"/>
    <property type="molecule type" value="Genomic_DNA"/>
</dbReference>
<dbReference type="EMBL" id="AP009048">
    <property type="protein sequence ID" value="BAE77975.1"/>
    <property type="molecule type" value="Genomic_DNA"/>
</dbReference>
<dbReference type="PIR" id="F23129">
    <property type="entry name" value="R3EC19"/>
</dbReference>
<dbReference type="RefSeq" id="NP_417775.1">
    <property type="nucleotide sequence ID" value="NC_000913.3"/>
</dbReference>
<dbReference type="RefSeq" id="WP_001138117.1">
    <property type="nucleotide sequence ID" value="NZ_STEB01000038.1"/>
</dbReference>
<dbReference type="PDB" id="2YKR">
    <property type="method" value="EM"/>
    <property type="resolution" value="9.80 A"/>
    <property type="chains" value="S=3-81"/>
</dbReference>
<dbReference type="PDB" id="3J9Y">
    <property type="method" value="EM"/>
    <property type="resolution" value="3.90 A"/>
    <property type="chains" value="s=1-92"/>
</dbReference>
<dbReference type="PDB" id="3J9Z">
    <property type="method" value="EM"/>
    <property type="resolution" value="3.60 A"/>
    <property type="chains" value="SS=2-92"/>
</dbReference>
<dbReference type="PDB" id="3JA1">
    <property type="method" value="EM"/>
    <property type="resolution" value="3.60 A"/>
    <property type="chains" value="SS=2-92"/>
</dbReference>
<dbReference type="PDB" id="3JBU">
    <property type="method" value="EM"/>
    <property type="resolution" value="3.64 A"/>
    <property type="chains" value="S=1-92"/>
</dbReference>
<dbReference type="PDB" id="3JBV">
    <property type="method" value="EM"/>
    <property type="resolution" value="3.32 A"/>
    <property type="chains" value="S=1-92"/>
</dbReference>
<dbReference type="PDB" id="3JCD">
    <property type="method" value="EM"/>
    <property type="resolution" value="3.70 A"/>
    <property type="chains" value="s=1-92"/>
</dbReference>
<dbReference type="PDB" id="3JCE">
    <property type="method" value="EM"/>
    <property type="resolution" value="3.20 A"/>
    <property type="chains" value="s=1-92"/>
</dbReference>
<dbReference type="PDB" id="3JCJ">
    <property type="method" value="EM"/>
    <property type="resolution" value="3.70 A"/>
    <property type="chains" value="z=1-92"/>
</dbReference>
<dbReference type="PDB" id="3JCN">
    <property type="method" value="EM"/>
    <property type="resolution" value="4.60 A"/>
    <property type="chains" value="t=1-92"/>
</dbReference>
<dbReference type="PDB" id="4A2I">
    <property type="method" value="EM"/>
    <property type="resolution" value="16.50 A"/>
    <property type="chains" value="S=3-81"/>
</dbReference>
<dbReference type="PDB" id="4ADV">
    <property type="method" value="EM"/>
    <property type="resolution" value="13.50 A"/>
    <property type="chains" value="S=2-92"/>
</dbReference>
<dbReference type="PDB" id="4U1U">
    <property type="method" value="X-ray"/>
    <property type="resolution" value="2.95 A"/>
    <property type="chains" value="AS/CS=3-81"/>
</dbReference>
<dbReference type="PDB" id="4U1V">
    <property type="method" value="X-ray"/>
    <property type="resolution" value="3.00 A"/>
    <property type="chains" value="AS/CS=3-81"/>
</dbReference>
<dbReference type="PDB" id="4U20">
    <property type="method" value="X-ray"/>
    <property type="resolution" value="2.90 A"/>
    <property type="chains" value="AS/CS=3-81"/>
</dbReference>
<dbReference type="PDB" id="4U24">
    <property type="method" value="X-ray"/>
    <property type="resolution" value="2.90 A"/>
    <property type="chains" value="AS/CS=3-81"/>
</dbReference>
<dbReference type="PDB" id="4U25">
    <property type="method" value="X-ray"/>
    <property type="resolution" value="2.90 A"/>
    <property type="chains" value="AS/CS=3-81"/>
</dbReference>
<dbReference type="PDB" id="4U26">
    <property type="method" value="X-ray"/>
    <property type="resolution" value="2.80 A"/>
    <property type="chains" value="AS/CS=3-81"/>
</dbReference>
<dbReference type="PDB" id="4U27">
    <property type="method" value="X-ray"/>
    <property type="resolution" value="2.80 A"/>
    <property type="chains" value="AS/CS=3-81"/>
</dbReference>
<dbReference type="PDB" id="4V47">
    <property type="method" value="EM"/>
    <property type="resolution" value="12.30 A"/>
    <property type="chains" value="BS=2-92"/>
</dbReference>
<dbReference type="PDB" id="4V48">
    <property type="method" value="EM"/>
    <property type="resolution" value="11.50 A"/>
    <property type="chains" value="BS=2-92"/>
</dbReference>
<dbReference type="PDB" id="4V4H">
    <property type="method" value="X-ray"/>
    <property type="resolution" value="3.46 A"/>
    <property type="chains" value="AS/CS=1-92"/>
</dbReference>
<dbReference type="PDB" id="4V4Q">
    <property type="method" value="X-ray"/>
    <property type="resolution" value="3.46 A"/>
    <property type="chains" value="AS/CS=2-92"/>
</dbReference>
<dbReference type="PDB" id="4V4V">
    <property type="method" value="EM"/>
    <property type="resolution" value="15.00 A"/>
    <property type="chains" value="AS=2-88"/>
</dbReference>
<dbReference type="PDB" id="4V4W">
    <property type="method" value="EM"/>
    <property type="resolution" value="15.00 A"/>
    <property type="chains" value="AS=2-88"/>
</dbReference>
<dbReference type="PDB" id="4V50">
    <property type="method" value="X-ray"/>
    <property type="resolution" value="3.22 A"/>
    <property type="chains" value="AS/CS=2-92"/>
</dbReference>
<dbReference type="PDB" id="4V52">
    <property type="method" value="X-ray"/>
    <property type="resolution" value="3.21 A"/>
    <property type="chains" value="AS/CS=2-92"/>
</dbReference>
<dbReference type="PDB" id="4V53">
    <property type="method" value="X-ray"/>
    <property type="resolution" value="3.54 A"/>
    <property type="chains" value="AS/CS=2-92"/>
</dbReference>
<dbReference type="PDB" id="4V54">
    <property type="method" value="X-ray"/>
    <property type="resolution" value="3.30 A"/>
    <property type="chains" value="AS/CS=2-92"/>
</dbReference>
<dbReference type="PDB" id="4V55">
    <property type="method" value="X-ray"/>
    <property type="resolution" value="4.00 A"/>
    <property type="chains" value="AS/CS=2-92"/>
</dbReference>
<dbReference type="PDB" id="4V56">
    <property type="method" value="X-ray"/>
    <property type="resolution" value="3.93 A"/>
    <property type="chains" value="AS/CS=2-92"/>
</dbReference>
<dbReference type="PDB" id="4V57">
    <property type="method" value="X-ray"/>
    <property type="resolution" value="3.50 A"/>
    <property type="chains" value="AS/CS=2-92"/>
</dbReference>
<dbReference type="PDB" id="4V5B">
    <property type="method" value="X-ray"/>
    <property type="resolution" value="3.74 A"/>
    <property type="chains" value="BS/DS=2-92"/>
</dbReference>
<dbReference type="PDB" id="4V5H">
    <property type="method" value="EM"/>
    <property type="resolution" value="5.80 A"/>
    <property type="chains" value="AS=3-81"/>
</dbReference>
<dbReference type="PDB" id="4V5Y">
    <property type="method" value="X-ray"/>
    <property type="resolution" value="4.45 A"/>
    <property type="chains" value="AS/CS=2-92"/>
</dbReference>
<dbReference type="PDB" id="4V64">
    <property type="method" value="X-ray"/>
    <property type="resolution" value="3.50 A"/>
    <property type="chains" value="AS/CS=2-92"/>
</dbReference>
<dbReference type="PDB" id="4V65">
    <property type="method" value="EM"/>
    <property type="resolution" value="9.00 A"/>
    <property type="chains" value="AL=1-92"/>
</dbReference>
<dbReference type="PDB" id="4V66">
    <property type="method" value="EM"/>
    <property type="resolution" value="9.00 A"/>
    <property type="chains" value="AL=1-92"/>
</dbReference>
<dbReference type="PDB" id="4V69">
    <property type="method" value="EM"/>
    <property type="resolution" value="6.70 A"/>
    <property type="chains" value="AS=3-81"/>
</dbReference>
<dbReference type="PDB" id="4V6C">
    <property type="method" value="X-ray"/>
    <property type="resolution" value="3.19 A"/>
    <property type="chains" value="AS/CS=1-92"/>
</dbReference>
<dbReference type="PDB" id="4V6D">
    <property type="method" value="X-ray"/>
    <property type="resolution" value="3.81 A"/>
    <property type="chains" value="AS/CS=1-92"/>
</dbReference>
<dbReference type="PDB" id="4V6E">
    <property type="method" value="X-ray"/>
    <property type="resolution" value="3.71 A"/>
    <property type="chains" value="AS/CS=1-92"/>
</dbReference>
<dbReference type="PDB" id="4V6K">
    <property type="method" value="EM"/>
    <property type="resolution" value="8.25 A"/>
    <property type="chains" value="BW=1-92"/>
</dbReference>
<dbReference type="PDB" id="4V6L">
    <property type="method" value="EM"/>
    <property type="resolution" value="13.20 A"/>
    <property type="chains" value="AW=1-92"/>
</dbReference>
<dbReference type="PDB" id="4V6M">
    <property type="method" value="EM"/>
    <property type="resolution" value="7.10 A"/>
    <property type="chains" value="AS=2-92"/>
</dbReference>
<dbReference type="PDB" id="4V6N">
    <property type="method" value="EM"/>
    <property type="resolution" value="12.10 A"/>
    <property type="chains" value="BV=2-92"/>
</dbReference>
<dbReference type="PDB" id="4V6O">
    <property type="method" value="EM"/>
    <property type="resolution" value="14.70 A"/>
    <property type="chains" value="AV=2-92"/>
</dbReference>
<dbReference type="PDB" id="4V6P">
    <property type="method" value="EM"/>
    <property type="resolution" value="13.50 A"/>
    <property type="chains" value="AV=2-92"/>
</dbReference>
<dbReference type="PDB" id="4V6Q">
    <property type="method" value="EM"/>
    <property type="resolution" value="11.50 A"/>
    <property type="chains" value="AV=2-92"/>
</dbReference>
<dbReference type="PDB" id="4V6R">
    <property type="method" value="EM"/>
    <property type="resolution" value="11.50 A"/>
    <property type="chains" value="AV=2-92"/>
</dbReference>
<dbReference type="PDB" id="4V6S">
    <property type="method" value="EM"/>
    <property type="resolution" value="13.10 A"/>
    <property type="chains" value="BU=2-92"/>
</dbReference>
<dbReference type="PDB" id="4V6T">
    <property type="method" value="EM"/>
    <property type="resolution" value="8.30 A"/>
    <property type="chains" value="AS=3-81"/>
</dbReference>
<dbReference type="PDB" id="4V6V">
    <property type="method" value="EM"/>
    <property type="resolution" value="9.80 A"/>
    <property type="chains" value="AS=2-92"/>
</dbReference>
<dbReference type="PDB" id="4V6Y">
    <property type="method" value="EM"/>
    <property type="resolution" value="12.00 A"/>
    <property type="chains" value="AS=3-81"/>
</dbReference>
<dbReference type="PDB" id="4V6Z">
    <property type="method" value="EM"/>
    <property type="resolution" value="12.00 A"/>
    <property type="chains" value="AS=3-81"/>
</dbReference>
<dbReference type="PDB" id="4V70">
    <property type="method" value="EM"/>
    <property type="resolution" value="17.00 A"/>
    <property type="chains" value="AS=3-81"/>
</dbReference>
<dbReference type="PDB" id="4V71">
    <property type="method" value="EM"/>
    <property type="resolution" value="20.00 A"/>
    <property type="chains" value="AS=3-81"/>
</dbReference>
<dbReference type="PDB" id="4V72">
    <property type="method" value="EM"/>
    <property type="resolution" value="13.00 A"/>
    <property type="chains" value="AS=3-81"/>
</dbReference>
<dbReference type="PDB" id="4V73">
    <property type="method" value="EM"/>
    <property type="resolution" value="15.00 A"/>
    <property type="chains" value="AS=3-81"/>
</dbReference>
<dbReference type="PDB" id="4V74">
    <property type="method" value="EM"/>
    <property type="resolution" value="17.00 A"/>
    <property type="chains" value="AS=3-81"/>
</dbReference>
<dbReference type="PDB" id="4V75">
    <property type="method" value="EM"/>
    <property type="resolution" value="12.00 A"/>
    <property type="chains" value="AS=3-81"/>
</dbReference>
<dbReference type="PDB" id="4V76">
    <property type="method" value="EM"/>
    <property type="resolution" value="17.00 A"/>
    <property type="chains" value="AS=3-81"/>
</dbReference>
<dbReference type="PDB" id="4V77">
    <property type="method" value="EM"/>
    <property type="resolution" value="17.00 A"/>
    <property type="chains" value="AS=3-81"/>
</dbReference>
<dbReference type="PDB" id="4V78">
    <property type="method" value="EM"/>
    <property type="resolution" value="20.00 A"/>
    <property type="chains" value="AS=3-81"/>
</dbReference>
<dbReference type="PDB" id="4V79">
    <property type="method" value="EM"/>
    <property type="resolution" value="15.00 A"/>
    <property type="chains" value="AS=3-81"/>
</dbReference>
<dbReference type="PDB" id="4V7A">
    <property type="method" value="EM"/>
    <property type="resolution" value="9.00 A"/>
    <property type="chains" value="AS=3-81"/>
</dbReference>
<dbReference type="PDB" id="4V7B">
    <property type="method" value="EM"/>
    <property type="resolution" value="6.80 A"/>
    <property type="chains" value="AS=1-92"/>
</dbReference>
<dbReference type="PDB" id="4V7C">
    <property type="method" value="EM"/>
    <property type="resolution" value="7.60 A"/>
    <property type="chains" value="AS=2-92"/>
</dbReference>
<dbReference type="PDB" id="4V7D">
    <property type="method" value="EM"/>
    <property type="resolution" value="7.60 A"/>
    <property type="chains" value="BS=2-92"/>
</dbReference>
<dbReference type="PDB" id="4V7I">
    <property type="method" value="EM"/>
    <property type="resolution" value="9.60 A"/>
    <property type="chains" value="BS=1-92"/>
</dbReference>
<dbReference type="PDB" id="4V7S">
    <property type="method" value="X-ray"/>
    <property type="resolution" value="3.25 A"/>
    <property type="chains" value="AS/CS=3-81"/>
</dbReference>
<dbReference type="PDB" id="4V7T">
    <property type="method" value="X-ray"/>
    <property type="resolution" value="3.19 A"/>
    <property type="chains" value="AS/CS=3-81"/>
</dbReference>
<dbReference type="PDB" id="4V7U">
    <property type="method" value="X-ray"/>
    <property type="resolution" value="3.10 A"/>
    <property type="chains" value="AS/CS=3-81"/>
</dbReference>
<dbReference type="PDB" id="4V7V">
    <property type="method" value="X-ray"/>
    <property type="resolution" value="3.29 A"/>
    <property type="chains" value="AS/CS=3-81"/>
</dbReference>
<dbReference type="PDB" id="4V85">
    <property type="method" value="X-ray"/>
    <property type="resolution" value="3.20 A"/>
    <property type="chains" value="AS=1-92"/>
</dbReference>
<dbReference type="PDB" id="4V89">
    <property type="method" value="X-ray"/>
    <property type="resolution" value="3.70 A"/>
    <property type="chains" value="AS=1-92"/>
</dbReference>
<dbReference type="PDB" id="4V9C">
    <property type="method" value="X-ray"/>
    <property type="resolution" value="3.30 A"/>
    <property type="chains" value="AS/CS=1-92"/>
</dbReference>
<dbReference type="PDB" id="4V9D">
    <property type="method" value="X-ray"/>
    <property type="resolution" value="3.00 A"/>
    <property type="chains" value="AS/BS=3-81"/>
</dbReference>
<dbReference type="PDB" id="4V9O">
    <property type="method" value="X-ray"/>
    <property type="resolution" value="2.90 A"/>
    <property type="chains" value="BS/DS/FS/HS=1-92"/>
</dbReference>
<dbReference type="PDB" id="4V9P">
    <property type="method" value="X-ray"/>
    <property type="resolution" value="2.90 A"/>
    <property type="chains" value="BS/DS/FS/HS=1-92"/>
</dbReference>
<dbReference type="PDB" id="4WF1">
    <property type="method" value="X-ray"/>
    <property type="resolution" value="3.09 A"/>
    <property type="chains" value="AS/CS=3-81"/>
</dbReference>
<dbReference type="PDB" id="4WOI">
    <property type="method" value="X-ray"/>
    <property type="resolution" value="3.00 A"/>
    <property type="chains" value="AS/DS=1-92"/>
</dbReference>
<dbReference type="PDB" id="4WWW">
    <property type="method" value="X-ray"/>
    <property type="resolution" value="3.10 A"/>
    <property type="chains" value="QS/XS=3-81"/>
</dbReference>
<dbReference type="PDB" id="4YBB">
    <property type="method" value="X-ray"/>
    <property type="resolution" value="2.10 A"/>
    <property type="chains" value="AS/BS=3-81"/>
</dbReference>
<dbReference type="PDB" id="5AFI">
    <property type="method" value="EM"/>
    <property type="resolution" value="2.90 A"/>
    <property type="chains" value="s=1-92"/>
</dbReference>
<dbReference type="PDB" id="5H5U">
    <property type="method" value="EM"/>
    <property type="resolution" value="3.00 A"/>
    <property type="chains" value="z=2-92"/>
</dbReference>
<dbReference type="PDB" id="5IQR">
    <property type="method" value="EM"/>
    <property type="resolution" value="3.00 A"/>
    <property type="chains" value="x=1-92"/>
</dbReference>
<dbReference type="PDB" id="5IT8">
    <property type="method" value="X-ray"/>
    <property type="resolution" value="3.12 A"/>
    <property type="chains" value="AS/BS=3-81"/>
</dbReference>
<dbReference type="PDB" id="5J5B">
    <property type="method" value="X-ray"/>
    <property type="resolution" value="2.80 A"/>
    <property type="chains" value="AS/BS=3-81"/>
</dbReference>
<dbReference type="PDB" id="5J7L">
    <property type="method" value="X-ray"/>
    <property type="resolution" value="3.00 A"/>
    <property type="chains" value="AS/BS=3-81"/>
</dbReference>
<dbReference type="PDB" id="5J88">
    <property type="method" value="X-ray"/>
    <property type="resolution" value="3.32 A"/>
    <property type="chains" value="AS/BS=3-81"/>
</dbReference>
<dbReference type="PDB" id="5J8A">
    <property type="method" value="X-ray"/>
    <property type="resolution" value="3.10 A"/>
    <property type="chains" value="AS/BS=3-81"/>
</dbReference>
<dbReference type="PDB" id="5J91">
    <property type="method" value="X-ray"/>
    <property type="resolution" value="2.96 A"/>
    <property type="chains" value="AS/BS=3-81"/>
</dbReference>
<dbReference type="PDB" id="5JC9">
    <property type="method" value="X-ray"/>
    <property type="resolution" value="3.03 A"/>
    <property type="chains" value="AS/BS=3-81"/>
</dbReference>
<dbReference type="PDB" id="5JTE">
    <property type="method" value="EM"/>
    <property type="resolution" value="3.60 A"/>
    <property type="chains" value="AS=1-92"/>
</dbReference>
<dbReference type="PDB" id="5JU8">
    <property type="method" value="EM"/>
    <property type="resolution" value="3.60 A"/>
    <property type="chains" value="AS=1-92"/>
</dbReference>
<dbReference type="PDB" id="5KCR">
    <property type="method" value="EM"/>
    <property type="resolution" value="3.60 A"/>
    <property type="chains" value="1s=1-92"/>
</dbReference>
<dbReference type="PDB" id="5KCS">
    <property type="method" value="EM"/>
    <property type="resolution" value="3.90 A"/>
    <property type="chains" value="1s=1-92"/>
</dbReference>
<dbReference type="PDB" id="5KPS">
    <property type="method" value="EM"/>
    <property type="resolution" value="3.90 A"/>
    <property type="chains" value="24=1-92"/>
</dbReference>
<dbReference type="PDB" id="5KPV">
    <property type="method" value="EM"/>
    <property type="resolution" value="4.10 A"/>
    <property type="chains" value="23=1-92"/>
</dbReference>
<dbReference type="PDB" id="5KPW">
    <property type="method" value="EM"/>
    <property type="resolution" value="3.90 A"/>
    <property type="chains" value="23=1-92"/>
</dbReference>
<dbReference type="PDB" id="5KPX">
    <property type="method" value="EM"/>
    <property type="resolution" value="3.90 A"/>
    <property type="chains" value="23=1-92"/>
</dbReference>
<dbReference type="PDB" id="5L3P">
    <property type="method" value="EM"/>
    <property type="resolution" value="3.70 A"/>
    <property type="chains" value="s=1-92"/>
</dbReference>
<dbReference type="PDB" id="5LZA">
    <property type="method" value="EM"/>
    <property type="resolution" value="3.60 A"/>
    <property type="chains" value="s=3-81"/>
</dbReference>
<dbReference type="PDB" id="5LZB">
    <property type="method" value="EM"/>
    <property type="resolution" value="5.30 A"/>
    <property type="chains" value="s=3-81"/>
</dbReference>
<dbReference type="PDB" id="5LZC">
    <property type="method" value="EM"/>
    <property type="resolution" value="4.80 A"/>
    <property type="chains" value="s=3-81"/>
</dbReference>
<dbReference type="PDB" id="5LZD">
    <property type="method" value="EM"/>
    <property type="resolution" value="3.40 A"/>
    <property type="chains" value="s=3-88"/>
</dbReference>
<dbReference type="PDB" id="5LZE">
    <property type="method" value="EM"/>
    <property type="resolution" value="3.50 A"/>
    <property type="chains" value="s=3-81"/>
</dbReference>
<dbReference type="PDB" id="5LZF">
    <property type="method" value="EM"/>
    <property type="resolution" value="4.60 A"/>
    <property type="chains" value="s=3-88"/>
</dbReference>
<dbReference type="PDB" id="5MDV">
    <property type="method" value="EM"/>
    <property type="resolution" value="2.97 A"/>
    <property type="chains" value="x=1-92"/>
</dbReference>
<dbReference type="PDB" id="5MDW">
    <property type="method" value="EM"/>
    <property type="resolution" value="3.06 A"/>
    <property type="chains" value="x=1-92"/>
</dbReference>
<dbReference type="PDB" id="5MDY">
    <property type="method" value="EM"/>
    <property type="resolution" value="3.35 A"/>
    <property type="chains" value="x=1-92"/>
</dbReference>
<dbReference type="PDB" id="5MDZ">
    <property type="method" value="EM"/>
    <property type="resolution" value="3.10 A"/>
    <property type="chains" value="x=1-92"/>
</dbReference>
<dbReference type="PDB" id="5ME0">
    <property type="method" value="EM"/>
    <property type="resolution" value="13.50 A"/>
    <property type="chains" value="S=1-92"/>
</dbReference>
<dbReference type="PDB" id="5ME1">
    <property type="method" value="EM"/>
    <property type="resolution" value="13.50 A"/>
    <property type="chains" value="S=1-92"/>
</dbReference>
<dbReference type="PDB" id="5MGP">
    <property type="method" value="EM"/>
    <property type="resolution" value="3.10 A"/>
    <property type="chains" value="s=3-81"/>
</dbReference>
<dbReference type="PDB" id="5MY1">
    <property type="method" value="EM"/>
    <property type="resolution" value="7.60 A"/>
    <property type="chains" value="S=2-92"/>
</dbReference>
<dbReference type="PDB" id="5NO2">
    <property type="method" value="EM"/>
    <property type="resolution" value="5.16 A"/>
    <property type="chains" value="S=3-81"/>
</dbReference>
<dbReference type="PDB" id="5NO3">
    <property type="method" value="EM"/>
    <property type="resolution" value="5.16 A"/>
    <property type="chains" value="S=3-81"/>
</dbReference>
<dbReference type="PDB" id="5NO4">
    <property type="method" value="EM"/>
    <property type="resolution" value="5.16 A"/>
    <property type="chains" value="S=3-81"/>
</dbReference>
<dbReference type="PDB" id="5NP6">
    <property type="method" value="EM"/>
    <property type="resolution" value="3.60 A"/>
    <property type="chains" value="V=3-81"/>
</dbReference>
<dbReference type="PDB" id="5NWY">
    <property type="method" value="EM"/>
    <property type="resolution" value="2.93 A"/>
    <property type="chains" value="I=1-92"/>
</dbReference>
<dbReference type="PDB" id="5O2R">
    <property type="method" value="EM"/>
    <property type="resolution" value="3.40 A"/>
    <property type="chains" value="s=3-81"/>
</dbReference>
<dbReference type="PDB" id="5U4I">
    <property type="method" value="EM"/>
    <property type="resolution" value="3.50 A"/>
    <property type="chains" value="s=2-83"/>
</dbReference>
<dbReference type="PDB" id="5U9F">
    <property type="method" value="EM"/>
    <property type="resolution" value="3.20 A"/>
    <property type="chains" value="S=1-92"/>
</dbReference>
<dbReference type="PDB" id="5U9G">
    <property type="method" value="EM"/>
    <property type="resolution" value="3.20 A"/>
    <property type="chains" value="S=1-92"/>
</dbReference>
<dbReference type="PDB" id="5UYK">
    <property type="method" value="EM"/>
    <property type="resolution" value="3.90 A"/>
    <property type="chains" value="S=3-81"/>
</dbReference>
<dbReference type="PDB" id="5UYL">
    <property type="method" value="EM"/>
    <property type="resolution" value="3.60 A"/>
    <property type="chains" value="S=3-81"/>
</dbReference>
<dbReference type="PDB" id="5UYM">
    <property type="method" value="EM"/>
    <property type="resolution" value="3.20 A"/>
    <property type="chains" value="S=3-81"/>
</dbReference>
<dbReference type="PDB" id="5UYN">
    <property type="method" value="EM"/>
    <property type="resolution" value="4.00 A"/>
    <property type="chains" value="S=3-81"/>
</dbReference>
<dbReference type="PDB" id="5UYP">
    <property type="method" value="EM"/>
    <property type="resolution" value="3.90 A"/>
    <property type="chains" value="S=3-81"/>
</dbReference>
<dbReference type="PDB" id="5UYQ">
    <property type="method" value="EM"/>
    <property type="resolution" value="3.80 A"/>
    <property type="chains" value="S=3-81"/>
</dbReference>
<dbReference type="PDB" id="5UZ4">
    <property type="method" value="EM"/>
    <property type="resolution" value="5.80 A"/>
    <property type="chains" value="S=1-92"/>
</dbReference>
<dbReference type="PDB" id="5WDT">
    <property type="method" value="EM"/>
    <property type="resolution" value="3.00 A"/>
    <property type="chains" value="s=3-81"/>
</dbReference>
<dbReference type="PDB" id="5WE4">
    <property type="method" value="EM"/>
    <property type="resolution" value="3.10 A"/>
    <property type="chains" value="s=3-81"/>
</dbReference>
<dbReference type="PDB" id="5WE6">
    <property type="method" value="EM"/>
    <property type="resolution" value="3.40 A"/>
    <property type="chains" value="s=3-81"/>
</dbReference>
<dbReference type="PDB" id="5WF0">
    <property type="method" value="EM"/>
    <property type="resolution" value="3.60 A"/>
    <property type="chains" value="s=3-81"/>
</dbReference>
<dbReference type="PDB" id="5WFK">
    <property type="method" value="EM"/>
    <property type="resolution" value="3.40 A"/>
    <property type="chains" value="s=3-81"/>
</dbReference>
<dbReference type="PDB" id="5WFS">
    <property type="method" value="EM"/>
    <property type="resolution" value="3.00 A"/>
    <property type="chains" value="s=3-81"/>
</dbReference>
<dbReference type="PDB" id="6AWB">
    <property type="method" value="EM"/>
    <property type="resolution" value="6.70 A"/>
    <property type="chains" value="V=3-81"/>
</dbReference>
<dbReference type="PDB" id="6AWC">
    <property type="method" value="EM"/>
    <property type="resolution" value="7.90 A"/>
    <property type="chains" value="V=3-81"/>
</dbReference>
<dbReference type="PDB" id="6AWD">
    <property type="method" value="EM"/>
    <property type="resolution" value="8.10 A"/>
    <property type="chains" value="V=3-81"/>
</dbReference>
<dbReference type="PDB" id="6BU8">
    <property type="method" value="EM"/>
    <property type="resolution" value="3.50 A"/>
    <property type="chains" value="S=3-81"/>
</dbReference>
<dbReference type="PDB" id="6BY1">
    <property type="method" value="X-ray"/>
    <property type="resolution" value="3.94 A"/>
    <property type="chains" value="AS/BS=3-81"/>
</dbReference>
<dbReference type="PDB" id="6C4I">
    <property type="method" value="EM"/>
    <property type="resolution" value="3.24 A"/>
    <property type="chains" value="s=1-92"/>
</dbReference>
<dbReference type="PDB" id="6DNC">
    <property type="method" value="EM"/>
    <property type="resolution" value="3.70 A"/>
    <property type="chains" value="FB=1-92"/>
</dbReference>
<dbReference type="PDB" id="6ENF">
    <property type="method" value="EM"/>
    <property type="resolution" value="3.20 A"/>
    <property type="chains" value="s=3-81"/>
</dbReference>
<dbReference type="PDB" id="6ENJ">
    <property type="method" value="EM"/>
    <property type="resolution" value="3.70 A"/>
    <property type="chains" value="s=3-81"/>
</dbReference>
<dbReference type="PDB" id="6ENU">
    <property type="method" value="EM"/>
    <property type="resolution" value="3.10 A"/>
    <property type="chains" value="s=3-81"/>
</dbReference>
<dbReference type="PDB" id="6GWT">
    <property type="method" value="EM"/>
    <property type="resolution" value="3.80 A"/>
    <property type="chains" value="s=3-81"/>
</dbReference>
<dbReference type="PDB" id="6GXM">
    <property type="method" value="EM"/>
    <property type="resolution" value="3.80 A"/>
    <property type="chains" value="s=3-81"/>
</dbReference>
<dbReference type="PDB" id="6GXN">
    <property type="method" value="EM"/>
    <property type="resolution" value="3.90 A"/>
    <property type="chains" value="s=3-81"/>
</dbReference>
<dbReference type="PDB" id="6GXO">
    <property type="method" value="EM"/>
    <property type="resolution" value="3.90 A"/>
    <property type="chains" value="s=3-81"/>
</dbReference>
<dbReference type="PDB" id="6GXP">
    <property type="method" value="EM"/>
    <property type="resolution" value="4.40 A"/>
    <property type="chains" value="s=3-81"/>
</dbReference>
<dbReference type="PDB" id="6H4N">
    <property type="method" value="EM"/>
    <property type="resolution" value="3.00 A"/>
    <property type="chains" value="s=3-81"/>
</dbReference>
<dbReference type="PDB" id="6H58">
    <property type="method" value="EM"/>
    <property type="resolution" value="7.90 A"/>
    <property type="chains" value="s/ss=3-81"/>
</dbReference>
<dbReference type="PDB" id="6HRM">
    <property type="method" value="EM"/>
    <property type="resolution" value="2.96 A"/>
    <property type="chains" value="x=2-84"/>
</dbReference>
<dbReference type="PDB" id="6I7V">
    <property type="method" value="X-ray"/>
    <property type="resolution" value="2.90 A"/>
    <property type="chains" value="AS/BS=3-81"/>
</dbReference>
<dbReference type="PDB" id="6O7K">
    <property type="method" value="EM"/>
    <property type="resolution" value="4.20 A"/>
    <property type="chains" value="z=3-81"/>
</dbReference>
<dbReference type="PDB" id="6O9J">
    <property type="method" value="EM"/>
    <property type="resolution" value="3.90 A"/>
    <property type="chains" value="s=3-81"/>
</dbReference>
<dbReference type="PDB" id="6O9K">
    <property type="method" value="EM"/>
    <property type="resolution" value="4.00 A"/>
    <property type="chains" value="s=3-81"/>
</dbReference>
<dbReference type="PDB" id="6OFX">
    <property type="method" value="EM"/>
    <property type="resolution" value="3.30 A"/>
    <property type="chains" value="X=3-81"/>
</dbReference>
<dbReference type="PDB" id="6OG7">
    <property type="method" value="EM"/>
    <property type="resolution" value="3.30 A"/>
    <property type="chains" value="X=3-81"/>
</dbReference>
<dbReference type="PDB" id="6OGF">
    <property type="method" value="EM"/>
    <property type="resolution" value="3.90 A"/>
    <property type="chains" value="X=1-92"/>
</dbReference>
<dbReference type="PDB" id="6OGG">
    <property type="method" value="EM"/>
    <property type="resolution" value="4.20 A"/>
    <property type="chains" value="X=1-92"/>
</dbReference>
<dbReference type="PDB" id="6OGI">
    <property type="method" value="EM"/>
    <property type="resolution" value="3.40 A"/>
    <property type="chains" value="X=1-92"/>
</dbReference>
<dbReference type="PDB" id="6OM6">
    <property type="method" value="EM"/>
    <property type="resolution" value="3.10 A"/>
    <property type="chains" value="x=1-92"/>
</dbReference>
<dbReference type="PDB" id="6ORE">
    <property type="method" value="EM"/>
    <property type="resolution" value="2.90 A"/>
    <property type="chains" value="x=2-84"/>
</dbReference>
<dbReference type="PDB" id="6ORL">
    <property type="method" value="EM"/>
    <property type="resolution" value="3.50 A"/>
    <property type="chains" value="x=2-84"/>
</dbReference>
<dbReference type="PDB" id="6OSK">
    <property type="method" value="EM"/>
    <property type="resolution" value="3.60 A"/>
    <property type="chains" value="x=2-84"/>
</dbReference>
<dbReference type="PDB" id="6OSQ">
    <property type="method" value="EM"/>
    <property type="resolution" value="3.50 A"/>
    <property type="chains" value="x=2-84"/>
</dbReference>
<dbReference type="PDB" id="6OST">
    <property type="method" value="EM"/>
    <property type="resolution" value="4.20 A"/>
    <property type="chains" value="x=2-84"/>
</dbReference>
<dbReference type="PDB" id="6OT3">
    <property type="method" value="EM"/>
    <property type="resolution" value="3.90 A"/>
    <property type="chains" value="x=2-84"/>
</dbReference>
<dbReference type="PDB" id="6OUO">
    <property type="method" value="EM"/>
    <property type="resolution" value="3.70 A"/>
    <property type="chains" value="x=2-84"/>
</dbReference>
<dbReference type="PDB" id="6Q98">
    <property type="method" value="EM"/>
    <property type="resolution" value="4.30 A"/>
    <property type="chains" value="x=1-92"/>
</dbReference>
<dbReference type="PDB" id="6Q9A">
    <property type="method" value="EM"/>
    <property type="resolution" value="3.70 A"/>
    <property type="chains" value="x=2-84"/>
</dbReference>
<dbReference type="PDB" id="6SZS">
    <property type="method" value="EM"/>
    <property type="resolution" value="3.06 A"/>
    <property type="chains" value="s=1-92"/>
</dbReference>
<dbReference type="PDB" id="6TBV">
    <property type="method" value="EM"/>
    <property type="resolution" value="2.70 A"/>
    <property type="chains" value="S191=1-92"/>
</dbReference>
<dbReference type="PDB" id="6TC3">
    <property type="method" value="EM"/>
    <property type="resolution" value="2.70 A"/>
    <property type="chains" value="S191=1-92"/>
</dbReference>
<dbReference type="PDB" id="6VU3">
    <property type="method" value="EM"/>
    <property type="resolution" value="3.70 A"/>
    <property type="chains" value="W=2-84"/>
</dbReference>
<dbReference type="PDB" id="6VWL">
    <property type="method" value="EM"/>
    <property type="resolution" value="3.10 A"/>
    <property type="chains" value="r=1-92"/>
</dbReference>
<dbReference type="PDB" id="6VWM">
    <property type="method" value="EM"/>
    <property type="resolution" value="3.40 A"/>
    <property type="chains" value="r=1-92"/>
</dbReference>
<dbReference type="PDB" id="6VWN">
    <property type="method" value="EM"/>
    <property type="resolution" value="3.40 A"/>
    <property type="chains" value="r=1-92"/>
</dbReference>
<dbReference type="PDB" id="6VYQ">
    <property type="method" value="EM"/>
    <property type="resolution" value="3.70 A"/>
    <property type="chains" value="W=1-92"/>
</dbReference>
<dbReference type="PDB" id="6VYR">
    <property type="method" value="EM"/>
    <property type="resolution" value="3.80 A"/>
    <property type="chains" value="W=1-92"/>
</dbReference>
<dbReference type="PDB" id="6VYS">
    <property type="method" value="EM"/>
    <property type="resolution" value="3.70 A"/>
    <property type="chains" value="W=1-92"/>
</dbReference>
<dbReference type="PDB" id="6VYT">
    <property type="method" value="EM"/>
    <property type="resolution" value="14.00 A"/>
    <property type="chains" value="W=1-92"/>
</dbReference>
<dbReference type="PDB" id="6VYU">
    <property type="method" value="EM"/>
    <property type="resolution" value="7.00 A"/>
    <property type="chains" value="W=1-92"/>
</dbReference>
<dbReference type="PDB" id="6VYW">
    <property type="method" value="EM"/>
    <property type="resolution" value="7.00 A"/>
    <property type="chains" value="W=1-92"/>
</dbReference>
<dbReference type="PDB" id="6VYX">
    <property type="method" value="EM"/>
    <property type="resolution" value="9.90 A"/>
    <property type="chains" value="W=1-92"/>
</dbReference>
<dbReference type="PDB" id="6VYY">
    <property type="method" value="EM"/>
    <property type="resolution" value="9.90 A"/>
    <property type="chains" value="W=1-92"/>
</dbReference>
<dbReference type="PDB" id="6VYZ">
    <property type="method" value="EM"/>
    <property type="resolution" value="9.90 A"/>
    <property type="chains" value="W=1-92"/>
</dbReference>
<dbReference type="PDB" id="6VZ2">
    <property type="method" value="EM"/>
    <property type="resolution" value="10.00 A"/>
    <property type="chains" value="W=1-92"/>
</dbReference>
<dbReference type="PDB" id="6VZ3">
    <property type="method" value="EM"/>
    <property type="resolution" value="8.90 A"/>
    <property type="chains" value="W=2-84"/>
</dbReference>
<dbReference type="PDB" id="6VZ5">
    <property type="method" value="EM"/>
    <property type="resolution" value="8.90 A"/>
    <property type="chains" value="W=1-92"/>
</dbReference>
<dbReference type="PDB" id="6VZ7">
    <property type="method" value="EM"/>
    <property type="resolution" value="7.00 A"/>
    <property type="chains" value="W=2-84"/>
</dbReference>
<dbReference type="PDB" id="6VZJ">
    <property type="method" value="EM"/>
    <property type="resolution" value="4.10 A"/>
    <property type="chains" value="W=2-84"/>
</dbReference>
<dbReference type="PDB" id="6W6K">
    <property type="method" value="EM"/>
    <property type="resolution" value="3.60 A"/>
    <property type="chains" value="S=1-92"/>
</dbReference>
<dbReference type="PDB" id="6W77">
    <property type="method" value="EM"/>
    <property type="resolution" value="3.60 A"/>
    <property type="chains" value="S=1-92"/>
</dbReference>
<dbReference type="PDB" id="6W7M">
    <property type="method" value="EM"/>
    <property type="resolution" value="3.80 A"/>
    <property type="chains" value="S=1-92"/>
</dbReference>
<dbReference type="PDB" id="6W7N">
    <property type="method" value="EM"/>
    <property type="resolution" value="3.40 A"/>
    <property type="chains" value="S=1-92"/>
</dbReference>
<dbReference type="PDB" id="6WD0">
    <property type="method" value="EM"/>
    <property type="resolution" value="3.00 A"/>
    <property type="chains" value="X=3-81"/>
</dbReference>
<dbReference type="PDB" id="6WD1">
    <property type="method" value="EM"/>
    <property type="resolution" value="3.30 A"/>
    <property type="chains" value="X=3-81"/>
</dbReference>
<dbReference type="PDB" id="6WD2">
    <property type="method" value="EM"/>
    <property type="resolution" value="3.60 A"/>
    <property type="chains" value="X=3-81"/>
</dbReference>
<dbReference type="PDB" id="6WD3">
    <property type="method" value="EM"/>
    <property type="resolution" value="3.60 A"/>
    <property type="chains" value="X=3-81"/>
</dbReference>
<dbReference type="PDB" id="6WD4">
    <property type="method" value="EM"/>
    <property type="resolution" value="3.70 A"/>
    <property type="chains" value="X=3-81"/>
</dbReference>
<dbReference type="PDB" id="6WD5">
    <property type="method" value="EM"/>
    <property type="resolution" value="3.60 A"/>
    <property type="chains" value="X=3-81"/>
</dbReference>
<dbReference type="PDB" id="6WD6">
    <property type="method" value="EM"/>
    <property type="resolution" value="3.70 A"/>
    <property type="chains" value="X=3-81"/>
</dbReference>
<dbReference type="PDB" id="6WD7">
    <property type="method" value="EM"/>
    <property type="resolution" value="3.90 A"/>
    <property type="chains" value="X=3-81"/>
</dbReference>
<dbReference type="PDB" id="6WD8">
    <property type="method" value="EM"/>
    <property type="resolution" value="3.70 A"/>
    <property type="chains" value="X=3-81"/>
</dbReference>
<dbReference type="PDB" id="6WD9">
    <property type="method" value="EM"/>
    <property type="resolution" value="3.70 A"/>
    <property type="chains" value="X=3-81"/>
</dbReference>
<dbReference type="PDB" id="6WDA">
    <property type="method" value="EM"/>
    <property type="resolution" value="3.80 A"/>
    <property type="chains" value="X=3-81"/>
</dbReference>
<dbReference type="PDB" id="6WDB">
    <property type="method" value="EM"/>
    <property type="resolution" value="4.00 A"/>
    <property type="chains" value="X=3-81"/>
</dbReference>
<dbReference type="PDB" id="6WDC">
    <property type="method" value="EM"/>
    <property type="resolution" value="4.20 A"/>
    <property type="chains" value="X=3-81"/>
</dbReference>
<dbReference type="PDB" id="6WDD">
    <property type="method" value="EM"/>
    <property type="resolution" value="3.20 A"/>
    <property type="chains" value="X=3-81"/>
</dbReference>
<dbReference type="PDB" id="6WDE">
    <property type="method" value="EM"/>
    <property type="resolution" value="3.00 A"/>
    <property type="chains" value="X=3-81"/>
</dbReference>
<dbReference type="PDB" id="6WDF">
    <property type="method" value="EM"/>
    <property type="resolution" value="3.30 A"/>
    <property type="chains" value="X=3-81"/>
</dbReference>
<dbReference type="PDB" id="6WDG">
    <property type="method" value="EM"/>
    <property type="resolution" value="3.30 A"/>
    <property type="chains" value="X=3-81"/>
</dbReference>
<dbReference type="PDB" id="6WDH">
    <property type="method" value="EM"/>
    <property type="resolution" value="4.30 A"/>
    <property type="chains" value="X=3-81"/>
</dbReference>
<dbReference type="PDB" id="6WDI">
    <property type="method" value="EM"/>
    <property type="resolution" value="4.00 A"/>
    <property type="chains" value="X=3-81"/>
</dbReference>
<dbReference type="PDB" id="6WDJ">
    <property type="method" value="EM"/>
    <property type="resolution" value="3.70 A"/>
    <property type="chains" value="X=3-81"/>
</dbReference>
<dbReference type="PDB" id="6WDK">
    <property type="method" value="EM"/>
    <property type="resolution" value="3.60 A"/>
    <property type="chains" value="X=3-81"/>
</dbReference>
<dbReference type="PDB" id="6WDL">
    <property type="method" value="EM"/>
    <property type="resolution" value="3.70 A"/>
    <property type="chains" value="X=3-81"/>
</dbReference>
<dbReference type="PDB" id="6WDM">
    <property type="method" value="EM"/>
    <property type="resolution" value="3.60 A"/>
    <property type="chains" value="X=3-81"/>
</dbReference>
<dbReference type="PDB" id="6WNV">
    <property type="method" value="EM"/>
    <property type="resolution" value="3.50 A"/>
    <property type="chains" value="X=3-81"/>
</dbReference>
<dbReference type="PDB" id="6WNW">
    <property type="method" value="EM"/>
    <property type="resolution" value="3.20 A"/>
    <property type="chains" value="X=3-81"/>
</dbReference>
<dbReference type="PDB" id="6X6T">
    <property type="method" value="EM"/>
    <property type="resolution" value="3.20 A"/>
    <property type="chains" value="W=1-92"/>
</dbReference>
<dbReference type="PDB" id="6X7F">
    <property type="method" value="EM"/>
    <property type="resolution" value="3.50 A"/>
    <property type="chains" value="W=1-92"/>
</dbReference>
<dbReference type="PDB" id="6X7K">
    <property type="method" value="EM"/>
    <property type="resolution" value="3.10 A"/>
    <property type="chains" value="W=1-92"/>
</dbReference>
<dbReference type="PDB" id="6X9Q">
    <property type="method" value="EM"/>
    <property type="resolution" value="4.80 A"/>
    <property type="chains" value="W=1-92"/>
</dbReference>
<dbReference type="PDB" id="6XDQ">
    <property type="method" value="EM"/>
    <property type="resolution" value="3.70 A"/>
    <property type="chains" value="W=1-92"/>
</dbReference>
<dbReference type="PDB" id="6XDR">
    <property type="method" value="EM"/>
    <property type="resolution" value="4.70 A"/>
    <property type="chains" value="W=1-92"/>
</dbReference>
<dbReference type="PDB" id="6XE0">
    <property type="method" value="EM"/>
    <property type="resolution" value="6.80 A"/>
    <property type="chains" value="S=3-81"/>
</dbReference>
<dbReference type="PDB" id="6XGF">
    <property type="method" value="EM"/>
    <property type="resolution" value="5.00 A"/>
    <property type="chains" value="W=1-92"/>
</dbReference>
<dbReference type="PDB" id="6XII">
    <property type="method" value="EM"/>
    <property type="resolution" value="7.00 A"/>
    <property type="chains" value="W=1-92"/>
</dbReference>
<dbReference type="PDB" id="6XIJ">
    <property type="method" value="EM"/>
    <property type="resolution" value="8.00 A"/>
    <property type="chains" value="W=1-92"/>
</dbReference>
<dbReference type="PDB" id="6XZA">
    <property type="method" value="EM"/>
    <property type="resolution" value="2.66 A"/>
    <property type="chains" value="S1=3-81"/>
</dbReference>
<dbReference type="PDB" id="6XZB">
    <property type="method" value="EM"/>
    <property type="resolution" value="2.54 A"/>
    <property type="chains" value="S1=3-81"/>
</dbReference>
<dbReference type="PDB" id="6Y69">
    <property type="method" value="EM"/>
    <property type="resolution" value="2.86 A"/>
    <property type="chains" value="s=3-81"/>
</dbReference>
<dbReference type="PDB" id="6ZTJ">
    <property type="method" value="EM"/>
    <property type="resolution" value="3.40 A"/>
    <property type="chains" value="AS=1-92"/>
</dbReference>
<dbReference type="PDB" id="6ZTL">
    <property type="method" value="EM"/>
    <property type="resolution" value="3.50 A"/>
    <property type="chains" value="AS=1-92"/>
</dbReference>
<dbReference type="PDB" id="6ZTM">
    <property type="method" value="EM"/>
    <property type="resolution" value="3.30 A"/>
    <property type="chains" value="AS=1-92"/>
</dbReference>
<dbReference type="PDB" id="6ZTN">
    <property type="method" value="EM"/>
    <property type="resolution" value="3.90 A"/>
    <property type="chains" value="AS=1-92"/>
</dbReference>
<dbReference type="PDB" id="6ZTO">
    <property type="method" value="EM"/>
    <property type="resolution" value="3.00 A"/>
    <property type="chains" value="AS=1-92"/>
</dbReference>
<dbReference type="PDB" id="6ZTP">
    <property type="method" value="EM"/>
    <property type="resolution" value="3.00 A"/>
    <property type="chains" value="AS=1-92"/>
</dbReference>
<dbReference type="PDB" id="6ZU1">
    <property type="method" value="EM"/>
    <property type="resolution" value="3.00 A"/>
    <property type="chains" value="AS=1-92"/>
</dbReference>
<dbReference type="PDB" id="7ABZ">
    <property type="method" value="EM"/>
    <property type="resolution" value="3.21 A"/>
    <property type="chains" value="x=3-81"/>
</dbReference>
<dbReference type="PDB" id="7AC7">
    <property type="method" value="EM"/>
    <property type="resolution" value="3.08 A"/>
    <property type="chains" value="x=2-83"/>
</dbReference>
<dbReference type="PDB" id="7ACJ">
    <property type="method" value="EM"/>
    <property type="resolution" value="3.20 A"/>
    <property type="chains" value="x=2-87"/>
</dbReference>
<dbReference type="PDB" id="7ACR">
    <property type="method" value="EM"/>
    <property type="resolution" value="3.44 A"/>
    <property type="chains" value="x=2-84"/>
</dbReference>
<dbReference type="PDB" id="7AF3">
    <property type="method" value="EM"/>
    <property type="resolution" value="2.82 A"/>
    <property type="chains" value="S=1-92"/>
</dbReference>
<dbReference type="PDB" id="7AF5">
    <property type="method" value="EM"/>
    <property type="resolution" value="2.96 A"/>
    <property type="chains" value="S=1-92"/>
</dbReference>
<dbReference type="PDB" id="7AF8">
    <property type="method" value="EM"/>
    <property type="resolution" value="2.75 A"/>
    <property type="chains" value="S=1-92"/>
</dbReference>
<dbReference type="PDB" id="7AFA">
    <property type="method" value="EM"/>
    <property type="resolution" value="2.95 A"/>
    <property type="chains" value="S=1-92"/>
</dbReference>
<dbReference type="PDB" id="7AFD">
    <property type="method" value="EM"/>
    <property type="resolution" value="3.44 A"/>
    <property type="chains" value="S=1-92"/>
</dbReference>
<dbReference type="PDB" id="7AFH">
    <property type="method" value="EM"/>
    <property type="resolution" value="3.59 A"/>
    <property type="chains" value="S=1-92"/>
</dbReference>
<dbReference type="PDB" id="7AFK">
    <property type="method" value="EM"/>
    <property type="resolution" value="4.90 A"/>
    <property type="chains" value="S=1-92"/>
</dbReference>
<dbReference type="PDB" id="7AFN">
    <property type="method" value="EM"/>
    <property type="resolution" value="3.86 A"/>
    <property type="chains" value="S=1-92"/>
</dbReference>
<dbReference type="PDB" id="7B5K">
    <property type="method" value="EM"/>
    <property type="resolution" value="2.90 A"/>
    <property type="chains" value="s=3-84"/>
</dbReference>
<dbReference type="PDB" id="7BOE">
    <property type="method" value="EM"/>
    <property type="resolution" value="2.90 A"/>
    <property type="chains" value="S=1-92"/>
</dbReference>
<dbReference type="PDB" id="7BOH">
    <property type="method" value="EM"/>
    <property type="resolution" value="2.82 A"/>
    <property type="chains" value="S=1-92"/>
</dbReference>
<dbReference type="PDB" id="7D6Z">
    <property type="method" value="EM"/>
    <property type="resolution" value="3.40 A"/>
    <property type="chains" value="z=1-92"/>
</dbReference>
<dbReference type="PDB" id="7D80">
    <property type="method" value="EM"/>
    <property type="resolution" value="4.10 A"/>
    <property type="chains" value="T=1-92"/>
</dbReference>
<dbReference type="PDB" id="7JSS">
    <property type="method" value="EM"/>
    <property type="resolution" value="3.70 A"/>
    <property type="chains" value="X=3-81"/>
</dbReference>
<dbReference type="PDB" id="7JSW">
    <property type="method" value="EM"/>
    <property type="resolution" value="3.80 A"/>
    <property type="chains" value="X=3-81"/>
</dbReference>
<dbReference type="PDB" id="7JSZ">
    <property type="method" value="EM"/>
    <property type="resolution" value="3.70 A"/>
    <property type="chains" value="X=3-81"/>
</dbReference>
<dbReference type="PDB" id="7JT1">
    <property type="method" value="EM"/>
    <property type="resolution" value="3.30 A"/>
    <property type="chains" value="X=3-81"/>
</dbReference>
<dbReference type="PDB" id="7JT2">
    <property type="method" value="EM"/>
    <property type="resolution" value="3.50 A"/>
    <property type="chains" value="X=3-81"/>
</dbReference>
<dbReference type="PDB" id="7JT3">
    <property type="method" value="EM"/>
    <property type="resolution" value="3.70 A"/>
    <property type="chains" value="X=3-81"/>
</dbReference>
<dbReference type="PDB" id="7K00">
    <property type="method" value="EM"/>
    <property type="resolution" value="1.98 A"/>
    <property type="chains" value="S=1-92"/>
</dbReference>
<dbReference type="PDB" id="7K50">
    <property type="method" value="EM"/>
    <property type="resolution" value="3.40 A"/>
    <property type="chains" value="X=3-81"/>
</dbReference>
<dbReference type="PDB" id="7K51">
    <property type="method" value="EM"/>
    <property type="resolution" value="3.50 A"/>
    <property type="chains" value="X=3-81"/>
</dbReference>
<dbReference type="PDB" id="7K52">
    <property type="method" value="EM"/>
    <property type="resolution" value="3.40 A"/>
    <property type="chains" value="X=3-81"/>
</dbReference>
<dbReference type="PDB" id="7K53">
    <property type="method" value="EM"/>
    <property type="resolution" value="3.20 A"/>
    <property type="chains" value="X=3-81"/>
</dbReference>
<dbReference type="PDB" id="7K54">
    <property type="method" value="EM"/>
    <property type="resolution" value="3.20 A"/>
    <property type="chains" value="X=3-81"/>
</dbReference>
<dbReference type="PDB" id="7K55">
    <property type="method" value="EM"/>
    <property type="resolution" value="3.30 A"/>
    <property type="chains" value="X=3-81"/>
</dbReference>
<dbReference type="PDB" id="7LV0">
    <property type="method" value="EM"/>
    <property type="resolution" value="3.20 A"/>
    <property type="chains" value="X=3-81"/>
</dbReference>
<dbReference type="PDB" id="7M5D">
    <property type="method" value="EM"/>
    <property type="resolution" value="2.80 A"/>
    <property type="chains" value="x=2-84"/>
</dbReference>
<dbReference type="PDB" id="7N1P">
    <property type="method" value="EM"/>
    <property type="resolution" value="2.33 A"/>
    <property type="chains" value="SS=1-92"/>
</dbReference>
<dbReference type="PDB" id="7N2C">
    <property type="method" value="EM"/>
    <property type="resolution" value="2.72 A"/>
    <property type="chains" value="SS=1-92"/>
</dbReference>
<dbReference type="PDB" id="7N2U">
    <property type="method" value="EM"/>
    <property type="resolution" value="2.53 A"/>
    <property type="chains" value="SS=1-92"/>
</dbReference>
<dbReference type="PDB" id="7N2V">
    <property type="method" value="EM"/>
    <property type="resolution" value="2.54 A"/>
    <property type="chains" value="SS=1-92"/>
</dbReference>
<dbReference type="PDB" id="7N30">
    <property type="method" value="EM"/>
    <property type="resolution" value="2.66 A"/>
    <property type="chains" value="SS=1-92"/>
</dbReference>
<dbReference type="PDB" id="7N31">
    <property type="method" value="EM"/>
    <property type="resolution" value="2.69 A"/>
    <property type="chains" value="SS=1-92"/>
</dbReference>
<dbReference type="PDB" id="7NAR">
    <property type="method" value="EM"/>
    <property type="resolution" value="3.00 A"/>
    <property type="chains" value="S=1-92"/>
</dbReference>
<dbReference type="PDB" id="7NAT">
    <property type="method" value="EM"/>
    <property type="resolution" value="3.59 A"/>
    <property type="chains" value="S=1-92"/>
</dbReference>
<dbReference type="PDB" id="7NAU">
    <property type="method" value="EM"/>
    <property type="resolution" value="3.78 A"/>
    <property type="chains" value="S=1-92"/>
</dbReference>
<dbReference type="PDB" id="7NAV">
    <property type="method" value="EM"/>
    <property type="resolution" value="4.80 A"/>
    <property type="chains" value="S=1-92"/>
</dbReference>
<dbReference type="PDB" id="7NAX">
    <property type="method" value="EM"/>
    <property type="resolution" value="2.96 A"/>
    <property type="chains" value="S=1-92"/>
</dbReference>
<dbReference type="PDB" id="7NBU">
    <property type="method" value="EM"/>
    <property type="resolution" value="3.11 A"/>
    <property type="chains" value="S=2-85"/>
</dbReference>
<dbReference type="PDB" id="7O19">
    <property type="method" value="EM"/>
    <property type="resolution" value="2.90 A"/>
    <property type="chains" value="AS=1-92"/>
</dbReference>
<dbReference type="PDB" id="7O1A">
    <property type="method" value="EM"/>
    <property type="resolution" value="2.40 A"/>
    <property type="chains" value="AS=1-92"/>
</dbReference>
<dbReference type="PDB" id="7O1C">
    <property type="method" value="EM"/>
    <property type="resolution" value="2.60 A"/>
    <property type="chains" value="AS=1-92"/>
</dbReference>
<dbReference type="PDB" id="7OE0">
    <property type="method" value="EM"/>
    <property type="resolution" value="2.69 A"/>
    <property type="chains" value="S=2-92"/>
</dbReference>
<dbReference type="PDB" id="7OE1">
    <property type="method" value="EM"/>
    <property type="resolution" value="3.05 A"/>
    <property type="chains" value="S=2-92"/>
</dbReference>
<dbReference type="PDB" id="7OIZ">
    <property type="method" value="EM"/>
    <property type="resolution" value="2.90 A"/>
    <property type="chains" value="S=1-92"/>
</dbReference>
<dbReference type="PDB" id="7OJ0">
    <property type="method" value="EM"/>
    <property type="resolution" value="3.50 A"/>
    <property type="chains" value="S=1-92"/>
</dbReference>
<dbReference type="PDB" id="7P3K">
    <property type="method" value="EM"/>
    <property type="resolution" value="2.90 A"/>
    <property type="chains" value="S=1-92"/>
</dbReference>
<dbReference type="PDB" id="7PJU">
    <property type="method" value="EM"/>
    <property type="resolution" value="9.50 A"/>
    <property type="chains" value="s=1-92"/>
</dbReference>
<dbReference type="PDB" id="7PJV">
    <property type="method" value="EM"/>
    <property type="resolution" value="3.10 A"/>
    <property type="chains" value="s=1-92"/>
</dbReference>
<dbReference type="PDB" id="7PJY">
    <property type="method" value="EM"/>
    <property type="resolution" value="3.10 A"/>
    <property type="chains" value="s=1-92"/>
</dbReference>
<dbReference type="PDB" id="7QG8">
    <property type="method" value="EM"/>
    <property type="resolution" value="3.97 A"/>
    <property type="chains" value="t=1-92"/>
</dbReference>
<dbReference type="PDB" id="7QGN">
    <property type="method" value="EM"/>
    <property type="resolution" value="3.37 A"/>
    <property type="chains" value="t=1-92"/>
</dbReference>
<dbReference type="PDB" id="7QGR">
    <property type="method" value="EM"/>
    <property type="resolution" value="5.70 A"/>
    <property type="chains" value="J=1-92"/>
</dbReference>
<dbReference type="PDB" id="7S1G">
    <property type="method" value="EM"/>
    <property type="resolution" value="2.48 A"/>
    <property type="chains" value="1=1-92"/>
</dbReference>
<dbReference type="PDB" id="7S1H">
    <property type="method" value="EM"/>
    <property type="resolution" value="2.35 A"/>
    <property type="chains" value="1=1-92"/>
</dbReference>
<dbReference type="PDB" id="7S1I">
    <property type="method" value="EM"/>
    <property type="resolution" value="2.48 A"/>
    <property type="chains" value="1=1-92"/>
</dbReference>
<dbReference type="PDB" id="7S1J">
    <property type="method" value="EM"/>
    <property type="resolution" value="2.47 A"/>
    <property type="chains" value="1=1-92"/>
</dbReference>
<dbReference type="PDB" id="7S1K">
    <property type="method" value="EM"/>
    <property type="resolution" value="2.42 A"/>
    <property type="chains" value="1=1-92"/>
</dbReference>
<dbReference type="PDB" id="7SA4">
    <property type="method" value="EM"/>
    <property type="resolution" value="2.55 A"/>
    <property type="chains" value="x=1-92"/>
</dbReference>
<dbReference type="PDB" id="7SS9">
    <property type="method" value="EM"/>
    <property type="resolution" value="3.90 A"/>
    <property type="chains" value="X=3-81"/>
</dbReference>
<dbReference type="PDB" id="7SSD">
    <property type="method" value="EM"/>
    <property type="resolution" value="3.30 A"/>
    <property type="chains" value="X=3-81"/>
</dbReference>
<dbReference type="PDB" id="7SSL">
    <property type="method" value="EM"/>
    <property type="resolution" value="3.80 A"/>
    <property type="chains" value="X=3-81"/>
</dbReference>
<dbReference type="PDB" id="7SSN">
    <property type="method" value="EM"/>
    <property type="resolution" value="3.20 A"/>
    <property type="chains" value="X=3-81"/>
</dbReference>
<dbReference type="PDB" id="7SSO">
    <property type="method" value="EM"/>
    <property type="resolution" value="3.20 A"/>
    <property type="chains" value="X=3-81"/>
</dbReference>
<dbReference type="PDB" id="7SSW">
    <property type="method" value="EM"/>
    <property type="resolution" value="3.80 A"/>
    <property type="chains" value="X=3-81"/>
</dbReference>
<dbReference type="PDB" id="7ST2">
    <property type="method" value="EM"/>
    <property type="resolution" value="2.90 A"/>
    <property type="chains" value="X=3-81"/>
</dbReference>
<dbReference type="PDB" id="7ST6">
    <property type="method" value="EM"/>
    <property type="resolution" value="3.00 A"/>
    <property type="chains" value="X=3-81"/>
</dbReference>
<dbReference type="PDB" id="7ST7">
    <property type="method" value="EM"/>
    <property type="resolution" value="3.20 A"/>
    <property type="chains" value="X=3-81"/>
</dbReference>
<dbReference type="PDB" id="7TOS">
    <property type="method" value="EM"/>
    <property type="resolution" value="2.90 A"/>
    <property type="chains" value="S19=3-81"/>
</dbReference>
<dbReference type="PDB" id="7UG7">
    <property type="method" value="EM"/>
    <property type="resolution" value="2.58 A"/>
    <property type="chains" value="SS=1-92"/>
</dbReference>
<dbReference type="PDB" id="7UPH">
    <property type="method" value="EM"/>
    <property type="resolution" value="4.18 A"/>
    <property type="chains" value="F=3-81"/>
</dbReference>
<dbReference type="PDB" id="7Y7C">
    <property type="method" value="EM"/>
    <property type="resolution" value="2.51 A"/>
    <property type="chains" value="S=1-92"/>
</dbReference>
<dbReference type="PDB" id="7Y7D">
    <property type="method" value="EM"/>
    <property type="resolution" value="2.58 A"/>
    <property type="chains" value="S=1-92"/>
</dbReference>
<dbReference type="PDB" id="7Y7E">
    <property type="method" value="EM"/>
    <property type="resolution" value="2.41 A"/>
    <property type="chains" value="S=1-92"/>
</dbReference>
<dbReference type="PDB" id="7Y7F">
    <property type="method" value="EM"/>
    <property type="resolution" value="2.43 A"/>
    <property type="chains" value="S=1-92"/>
</dbReference>
<dbReference type="PDB" id="7Y7G">
    <property type="method" value="EM"/>
    <property type="resolution" value="2.34 A"/>
    <property type="chains" value="S=1-92"/>
</dbReference>
<dbReference type="PDB" id="7Y7H">
    <property type="method" value="EM"/>
    <property type="resolution" value="2.51 A"/>
    <property type="chains" value="S=1-92"/>
</dbReference>
<dbReference type="PDB" id="7ZTA">
    <property type="method" value="EM"/>
    <property type="resolution" value="2.70 A"/>
    <property type="chains" value="S191=2-84"/>
</dbReference>
<dbReference type="PDB" id="8A3L">
    <property type="method" value="EM"/>
    <property type="resolution" value="3.42 A"/>
    <property type="chains" value="S=1-92"/>
</dbReference>
<dbReference type="PDB" id="8AKN">
    <property type="method" value="EM"/>
    <property type="resolution" value="2.30 A"/>
    <property type="chains" value="T=1-92"/>
</dbReference>
<dbReference type="PDB" id="8AM9">
    <property type="method" value="EM"/>
    <property type="resolution" value="2.80 A"/>
    <property type="chains" value="T=1-92"/>
</dbReference>
<dbReference type="PDB" id="8AYE">
    <property type="method" value="EM"/>
    <property type="resolution" value="1.96 A"/>
    <property type="chains" value="S=1-92"/>
</dbReference>
<dbReference type="PDB" id="8B0X">
    <property type="method" value="EM"/>
    <property type="resolution" value="1.55 A"/>
    <property type="chains" value="S=1-92"/>
</dbReference>
<dbReference type="PDB" id="8B7Y">
    <property type="method" value="EM"/>
    <property type="resolution" value="3.00 A"/>
    <property type="chains" value="x=1-92"/>
</dbReference>
<dbReference type="PDB" id="8BF7">
    <property type="method" value="EM"/>
    <property type="resolution" value="2.33 A"/>
    <property type="chains" value="w=1-92"/>
</dbReference>
<dbReference type="PDB" id="8BGE">
    <property type="method" value="EM"/>
    <property type="resolution" value="2.11 A"/>
    <property type="chains" value="w=1-92"/>
</dbReference>
<dbReference type="PDB" id="8BGH">
    <property type="method" value="EM"/>
    <property type="resolution" value="2.88 A"/>
    <property type="chains" value="w=1-92"/>
</dbReference>
<dbReference type="PDB" id="8BH4">
    <property type="method" value="EM"/>
    <property type="resolution" value="2.62 A"/>
    <property type="chains" value="w=1-92"/>
</dbReference>
<dbReference type="PDB" id="8BHJ">
    <property type="method" value="EM"/>
    <property type="resolution" value="2.81 A"/>
    <property type="chains" value="w=1-92"/>
</dbReference>
<dbReference type="PDB" id="8BHL">
    <property type="method" value="EM"/>
    <property type="resolution" value="2.21 A"/>
    <property type="chains" value="w=1-92"/>
</dbReference>
<dbReference type="PDB" id="8BHN">
    <property type="method" value="EM"/>
    <property type="resolution" value="2.85 A"/>
    <property type="chains" value="w=1-92"/>
</dbReference>
<dbReference type="PDB" id="8BHP">
    <property type="method" value="EM"/>
    <property type="resolution" value="2.37 A"/>
    <property type="chains" value="w=1-92"/>
</dbReference>
<dbReference type="PDB" id="8BIL">
    <property type="method" value="EM"/>
    <property type="resolution" value="2.04 A"/>
    <property type="chains" value="w=1-92"/>
</dbReference>
<dbReference type="PDB" id="8BIM">
    <property type="method" value="EM"/>
    <property type="resolution" value="2.04 A"/>
    <property type="chains" value="w=1-92"/>
</dbReference>
<dbReference type="PDB" id="8CA7">
    <property type="method" value="EM"/>
    <property type="resolution" value="2.06 A"/>
    <property type="chains" value="S=1-92"/>
</dbReference>
<dbReference type="PDB" id="8CAZ">
    <property type="method" value="EM"/>
    <property type="resolution" value="2.11 A"/>
    <property type="chains" value="S=1-92"/>
</dbReference>
<dbReference type="PDB" id="8CF1">
    <property type="method" value="EM"/>
    <property type="resolution" value="1.82 A"/>
    <property type="chains" value="S=1-92"/>
</dbReference>
<dbReference type="PDB" id="8CF8">
    <property type="method" value="EM"/>
    <property type="resolution" value="2.20 A"/>
    <property type="chains" value="S=1-92"/>
</dbReference>
<dbReference type="PDB" id="8CGI">
    <property type="method" value="EM"/>
    <property type="resolution" value="1.89 A"/>
    <property type="chains" value="S=1-92"/>
</dbReference>
<dbReference type="PDB" id="8EIU">
    <property type="method" value="EM"/>
    <property type="resolution" value="2.24 A"/>
    <property type="chains" value="S=1-92"/>
</dbReference>
<dbReference type="PDB" id="8EKC">
    <property type="method" value="EM"/>
    <property type="resolution" value="2.70 A"/>
    <property type="chains" value="s=1-92"/>
</dbReference>
<dbReference type="PDB" id="8EMM">
    <property type="method" value="EM"/>
    <property type="resolution" value="2.10 A"/>
    <property type="chains" value="S=1-92"/>
</dbReference>
<dbReference type="PDB" id="8EYQ">
    <property type="method" value="EM"/>
    <property type="resolution" value="3.30 A"/>
    <property type="chains" value="S=1-92"/>
</dbReference>
<dbReference type="PDB" id="8EYT">
    <property type="method" value="EM"/>
    <property type="resolution" value="2.80 A"/>
    <property type="chains" value="S=1-92"/>
</dbReference>
<dbReference type="PDB" id="8FIZ">
    <property type="method" value="EM"/>
    <property type="resolution" value="3.80 A"/>
    <property type="chains" value="AD=1-92"/>
</dbReference>
<dbReference type="PDB" id="8FTO">
    <property type="method" value="EM"/>
    <property type="resolution" value="1.85 A"/>
    <property type="chains" value="S=1-92"/>
</dbReference>
<dbReference type="PDB" id="8FZD">
    <property type="method" value="EM"/>
    <property type="resolution" value="3.10 A"/>
    <property type="chains" value="s=1-92"/>
</dbReference>
<dbReference type="PDB" id="8FZE">
    <property type="method" value="EM"/>
    <property type="resolution" value="3.00 A"/>
    <property type="chains" value="s=1-92"/>
</dbReference>
<dbReference type="PDB" id="8FZF">
    <property type="method" value="EM"/>
    <property type="resolution" value="3.20 A"/>
    <property type="chains" value="s=1-92"/>
</dbReference>
<dbReference type="PDB" id="8FZG">
    <property type="method" value="EM"/>
    <property type="resolution" value="3.10 A"/>
    <property type="chains" value="s=1-92"/>
</dbReference>
<dbReference type="PDB" id="8FZH">
    <property type="method" value="EM"/>
    <property type="resolution" value="2.90 A"/>
    <property type="chains" value="s=1-92"/>
</dbReference>
<dbReference type="PDB" id="8FZI">
    <property type="method" value="EM"/>
    <property type="resolution" value="3.10 A"/>
    <property type="chains" value="s=1-92"/>
</dbReference>
<dbReference type="PDB" id="8FZJ">
    <property type="method" value="EM"/>
    <property type="resolution" value="3.00 A"/>
    <property type="chains" value="s=1-92"/>
</dbReference>
<dbReference type="PDB" id="8G2U">
    <property type="method" value="EM"/>
    <property type="resolution" value="3.00 A"/>
    <property type="chains" value="r=3-81"/>
</dbReference>
<dbReference type="PDB" id="8G31">
    <property type="method" value="EM"/>
    <property type="resolution" value="3.20 A"/>
    <property type="chains" value="r=3-81"/>
</dbReference>
<dbReference type="PDB" id="8G34">
    <property type="method" value="EM"/>
    <property type="resolution" value="3.20 A"/>
    <property type="chains" value="r=3-81"/>
</dbReference>
<dbReference type="PDB" id="8G38">
    <property type="method" value="EM"/>
    <property type="resolution" value="3.20 A"/>
    <property type="chains" value="r=3-81"/>
</dbReference>
<dbReference type="PDB" id="8G6W">
    <property type="method" value="EM"/>
    <property type="resolution" value="2.02 A"/>
    <property type="chains" value="S=1-92"/>
</dbReference>
<dbReference type="PDB" id="8G7P">
    <property type="method" value="EM"/>
    <property type="resolution" value="2.90 A"/>
    <property type="chains" value="s=1-92"/>
</dbReference>
<dbReference type="PDB" id="8G7Q">
    <property type="method" value="EM"/>
    <property type="resolution" value="3.10 A"/>
    <property type="chains" value="s=1-92"/>
</dbReference>
<dbReference type="PDB" id="8G7R">
    <property type="method" value="EM"/>
    <property type="resolution" value="2.80 A"/>
    <property type="chains" value="s=1-92"/>
</dbReference>
<dbReference type="PDB" id="8G7S">
    <property type="method" value="EM"/>
    <property type="resolution" value="3.10 A"/>
    <property type="chains" value="s=1-92"/>
</dbReference>
<dbReference type="PDB" id="8HSP">
    <property type="method" value="EM"/>
    <property type="resolution" value="2.32 A"/>
    <property type="chains" value="S=1-92"/>
</dbReference>
<dbReference type="PDB" id="8HTZ">
    <property type="method" value="EM"/>
    <property type="resolution" value="2.40 A"/>
    <property type="chains" value="S=1-92"/>
</dbReference>
<dbReference type="PDB" id="8HU1">
    <property type="method" value="EM"/>
    <property type="resolution" value="2.69 A"/>
    <property type="chains" value="S=1-92"/>
</dbReference>
<dbReference type="PDB" id="8IFB">
    <property type="method" value="EM"/>
    <property type="resolution" value="2.43 A"/>
    <property type="chains" value="S=1-92"/>
</dbReference>
<dbReference type="PDB" id="8IFC">
    <property type="method" value="EM"/>
    <property type="resolution" value="2.90 A"/>
    <property type="chains" value="S=1-92"/>
</dbReference>
<dbReference type="PDB" id="8JSG">
    <property type="method" value="EM"/>
    <property type="resolution" value="4.60 A"/>
    <property type="chains" value="z=2-81"/>
</dbReference>
<dbReference type="PDB" id="8K3O">
    <property type="method" value="EM"/>
    <property type="resolution" value="3.88 A"/>
    <property type="chains" value="S=1-92"/>
</dbReference>
<dbReference type="PDB" id="8K4E">
    <property type="method" value="EM"/>
    <property type="resolution" value="3.40 A"/>
    <property type="chains" value="S=1-92"/>
</dbReference>
<dbReference type="PDB" id="8P16">
    <property type="method" value="EM"/>
    <property type="resolution" value="2.77 A"/>
    <property type="chains" value="x=1-92"/>
</dbReference>
<dbReference type="PDB" id="8P17">
    <property type="method" value="EM"/>
    <property type="resolution" value="2.78 A"/>
    <property type="chains" value="x=1-92"/>
</dbReference>
<dbReference type="PDB" id="8P18">
    <property type="method" value="EM"/>
    <property type="resolution" value="2.77 A"/>
    <property type="chains" value="x=1-92"/>
</dbReference>
<dbReference type="PDB" id="8PEG">
    <property type="method" value="EM"/>
    <property type="resolution" value="3.30 A"/>
    <property type="chains" value="S=1-92"/>
</dbReference>
<dbReference type="PDB" id="8PHJ">
    <property type="method" value="EM"/>
    <property type="resolution" value="3.67 A"/>
    <property type="chains" value="S=1-92"/>
</dbReference>
<dbReference type="PDB" id="8PKL">
    <property type="method" value="EM"/>
    <property type="resolution" value="3.09 A"/>
    <property type="chains" value="S=1-92"/>
</dbReference>
<dbReference type="PDB" id="8PVA">
    <property type="method" value="EM"/>
    <property type="resolution" value="4.50 A"/>
    <property type="chains" value="S=1-92"/>
</dbReference>
<dbReference type="PDB" id="8Q4F">
    <property type="method" value="EM"/>
    <property type="resolution" value="3.10 A"/>
    <property type="chains" value="S=1-92"/>
</dbReference>
<dbReference type="PDB" id="8QBT">
    <property type="method" value="EM"/>
    <property type="resolution" value="2.20 A"/>
    <property type="chains" value="1=1-92"/>
</dbReference>
<dbReference type="PDB" id="8QK7">
    <property type="method" value="EM"/>
    <property type="resolution" value="2.77 A"/>
    <property type="chains" value="x=1-92"/>
</dbReference>
<dbReference type="PDB" id="8QOA">
    <property type="method" value="EM"/>
    <property type="resolution" value="2.00 A"/>
    <property type="chains" value="S=1-92"/>
</dbReference>
<dbReference type="PDB" id="8R3V">
    <property type="method" value="EM"/>
    <property type="resolution" value="3.28 A"/>
    <property type="chains" value="S1/S2=1-92"/>
</dbReference>
<dbReference type="PDB" id="8R6C">
    <property type="method" value="EM"/>
    <property type="resolution" value="2.20 A"/>
    <property type="chains" value="S=1-92"/>
</dbReference>
<dbReference type="PDB" id="8R8M">
    <property type="method" value="EM"/>
    <property type="resolution" value="2.40 A"/>
    <property type="chains" value="S=1-92"/>
</dbReference>
<dbReference type="PDB" id="8RCL">
    <property type="method" value="EM"/>
    <property type="resolution" value="3.49 A"/>
    <property type="chains" value="S1/S2=1-92"/>
</dbReference>
<dbReference type="PDB" id="8RCM">
    <property type="method" value="EM"/>
    <property type="resolution" value="3.59 A"/>
    <property type="chains" value="S1/S2=1-92"/>
</dbReference>
<dbReference type="PDB" id="8RCS">
    <property type="method" value="EM"/>
    <property type="resolution" value="4.46 A"/>
    <property type="chains" value="S1/S2=1-92"/>
</dbReference>
<dbReference type="PDB" id="8RCT">
    <property type="method" value="EM"/>
    <property type="resolution" value="5.32 A"/>
    <property type="chains" value="S1/S2=1-92"/>
</dbReference>
<dbReference type="PDB" id="8SYL">
    <property type="method" value="EM"/>
    <property type="resolution" value="2.90 A"/>
    <property type="chains" value="s=1-92"/>
</dbReference>
<dbReference type="PDB" id="8T5D">
    <property type="method" value="EM"/>
    <property type="resolution" value="3.20 A"/>
    <property type="chains" value="r=3-81"/>
</dbReference>
<dbReference type="PDB" id="8T5H">
    <property type="method" value="EM"/>
    <property type="resolution" value="3.30 A"/>
    <property type="chains" value="r=3-81"/>
</dbReference>
<dbReference type="PDB" id="8UPO">
    <property type="method" value="EM"/>
    <property type="resolution" value="5.50 A"/>
    <property type="chains" value="W=1-92"/>
</dbReference>
<dbReference type="PDB" id="8UPR">
    <property type="method" value="EM"/>
    <property type="resolution" value="5.30 A"/>
    <property type="chains" value="W=1-92"/>
</dbReference>
<dbReference type="PDB" id="8UQL">
    <property type="method" value="EM"/>
    <property type="resolution" value="3.20 A"/>
    <property type="chains" value="W=1-92"/>
</dbReference>
<dbReference type="PDB" id="8UQM">
    <property type="method" value="EM"/>
    <property type="resolution" value="5.30 A"/>
    <property type="chains" value="W=1-92"/>
</dbReference>
<dbReference type="PDB" id="8UQP">
    <property type="method" value="EM"/>
    <property type="resolution" value="3.80 A"/>
    <property type="chains" value="W=1-92"/>
</dbReference>
<dbReference type="PDB" id="8UR0">
    <property type="method" value="EM"/>
    <property type="resolution" value="3.40 A"/>
    <property type="chains" value="W=1-92"/>
</dbReference>
<dbReference type="PDB" id="8URH">
    <property type="method" value="EM"/>
    <property type="resolution" value="5.70 A"/>
    <property type="chains" value="W=1-92"/>
</dbReference>
<dbReference type="PDB" id="8URI">
    <property type="method" value="EM"/>
    <property type="resolution" value="5.30 A"/>
    <property type="chains" value="W=1-92"/>
</dbReference>
<dbReference type="PDB" id="8URX">
    <property type="method" value="EM"/>
    <property type="resolution" value="6.60 A"/>
    <property type="chains" value="W=1-92"/>
</dbReference>
<dbReference type="PDB" id="8URY">
    <property type="method" value="EM"/>
    <property type="resolution" value="3.10 A"/>
    <property type="chains" value="W=1-92"/>
</dbReference>
<dbReference type="PDB" id="8VS9">
    <property type="method" value="EM"/>
    <property type="resolution" value="3.90 A"/>
    <property type="chains" value="S19=1-92"/>
</dbReference>
<dbReference type="PDB" id="8VSA">
    <property type="method" value="EM"/>
    <property type="resolution" value="3.70 A"/>
    <property type="chains" value="S19=1-92"/>
</dbReference>
<dbReference type="PDB" id="8YUO">
    <property type="method" value="EM"/>
    <property type="resolution" value="2.25 A"/>
    <property type="chains" value="S=1-92"/>
</dbReference>
<dbReference type="PDB" id="8YUP">
    <property type="method" value="EM"/>
    <property type="resolution" value="2.39 A"/>
    <property type="chains" value="S=1-92"/>
</dbReference>
<dbReference type="PDB" id="8YUQ">
    <property type="method" value="EM"/>
    <property type="resolution" value="2.41 A"/>
    <property type="chains" value="S=1-92"/>
</dbReference>
<dbReference type="PDB" id="8YUR">
    <property type="method" value="EM"/>
    <property type="resolution" value="2.47 A"/>
    <property type="chains" value="S=1-92"/>
</dbReference>
<dbReference type="PDB" id="8YUS">
    <property type="method" value="EM"/>
    <property type="resolution" value="2.43 A"/>
    <property type="chains" value="S=1-92"/>
</dbReference>
<dbReference type="PDB" id="9DUK">
    <property type="method" value="EM"/>
    <property type="resolution" value="2.56 A"/>
    <property type="chains" value="S=1-92"/>
</dbReference>
<dbReference type="PDB" id="9DUL">
    <property type="method" value="EM"/>
    <property type="resolution" value="2.56 A"/>
    <property type="chains" value="S=1-92"/>
</dbReference>
<dbReference type="PDB" id="9FBV">
    <property type="method" value="EM"/>
    <property type="resolution" value="2.40 A"/>
    <property type="chains" value="S=1-92"/>
</dbReference>
<dbReference type="PDB" id="9GFT">
    <property type="method" value="EM"/>
    <property type="resolution" value="3.10 A"/>
    <property type="chains" value="AR/t=1-92"/>
</dbReference>
<dbReference type="PDB" id="9GGR">
    <property type="method" value="EM"/>
    <property type="resolution" value="3.20 A"/>
    <property type="chains" value="AR/t=1-92"/>
</dbReference>
<dbReference type="PDB" id="9GUP">
    <property type="method" value="EM"/>
    <property type="resolution" value="2.80 A"/>
    <property type="chains" value="T=1-92"/>
</dbReference>
<dbReference type="PDB" id="9GUQ">
    <property type="method" value="EM"/>
    <property type="resolution" value="3.10 A"/>
    <property type="chains" value="T=1-92"/>
</dbReference>
<dbReference type="PDB" id="9GUS">
    <property type="method" value="EM"/>
    <property type="resolution" value="3.50 A"/>
    <property type="chains" value="T=1-92"/>
</dbReference>
<dbReference type="PDB" id="9GUT">
    <property type="method" value="EM"/>
    <property type="resolution" value="2.80 A"/>
    <property type="chains" value="T=1-92"/>
</dbReference>
<dbReference type="PDB" id="9GUU">
    <property type="method" value="EM"/>
    <property type="resolution" value="2.50 A"/>
    <property type="chains" value="T=1-92"/>
</dbReference>
<dbReference type="PDB" id="9GUV">
    <property type="method" value="EM"/>
    <property type="resolution" value="3.00 A"/>
    <property type="chains" value="T=1-92"/>
</dbReference>
<dbReference type="PDB" id="9GUW">
    <property type="method" value="EM"/>
    <property type="resolution" value="3.10 A"/>
    <property type="chains" value="T=1-92"/>
</dbReference>
<dbReference type="PDB" id="9GUX">
    <property type="method" value="EM"/>
    <property type="resolution" value="3.30 A"/>
    <property type="chains" value="T=1-92"/>
</dbReference>
<dbReference type="PDB" id="9MOR">
    <property type="method" value="EM"/>
    <property type="resolution" value="2.65 A"/>
    <property type="chains" value="x=1-92"/>
</dbReference>
<dbReference type="PDB" id="9MQ4">
    <property type="method" value="EM"/>
    <property type="resolution" value="2.78 A"/>
    <property type="chains" value="x=1-92"/>
</dbReference>
<dbReference type="PDBsum" id="2YKR"/>
<dbReference type="PDBsum" id="3J9Y"/>
<dbReference type="PDBsum" id="3J9Z"/>
<dbReference type="PDBsum" id="3JA1"/>
<dbReference type="PDBsum" id="3JBU"/>
<dbReference type="PDBsum" id="3JBV"/>
<dbReference type="PDBsum" id="3JCD"/>
<dbReference type="PDBsum" id="3JCE"/>
<dbReference type="PDBsum" id="3JCJ"/>
<dbReference type="PDBsum" id="3JCN"/>
<dbReference type="PDBsum" id="4A2I"/>
<dbReference type="PDBsum" id="4ADV"/>
<dbReference type="PDBsum" id="4U1U"/>
<dbReference type="PDBsum" id="4U1V"/>
<dbReference type="PDBsum" id="4U20"/>
<dbReference type="PDBsum" id="4U24"/>
<dbReference type="PDBsum" id="4U25"/>
<dbReference type="PDBsum" id="4U26"/>
<dbReference type="PDBsum" id="4U27"/>
<dbReference type="PDBsum" id="4V47"/>
<dbReference type="PDBsum" id="4V48"/>
<dbReference type="PDBsum" id="4V4H"/>
<dbReference type="PDBsum" id="4V4Q"/>
<dbReference type="PDBsum" id="4V4V"/>
<dbReference type="PDBsum" id="4V4W"/>
<dbReference type="PDBsum" id="4V50"/>
<dbReference type="PDBsum" id="4V52"/>
<dbReference type="PDBsum" id="4V53"/>
<dbReference type="PDBsum" id="4V54"/>
<dbReference type="PDBsum" id="4V55"/>
<dbReference type="PDBsum" id="4V56"/>
<dbReference type="PDBsum" id="4V57"/>
<dbReference type="PDBsum" id="4V5B"/>
<dbReference type="PDBsum" id="4V5H"/>
<dbReference type="PDBsum" id="4V5Y"/>
<dbReference type="PDBsum" id="4V64"/>
<dbReference type="PDBsum" id="4V65"/>
<dbReference type="PDBsum" id="4V66"/>
<dbReference type="PDBsum" id="4V69"/>
<dbReference type="PDBsum" id="4V6C"/>
<dbReference type="PDBsum" id="4V6D"/>
<dbReference type="PDBsum" id="4V6E"/>
<dbReference type="PDBsum" id="4V6K"/>
<dbReference type="PDBsum" id="4V6L"/>
<dbReference type="PDBsum" id="4V6M"/>
<dbReference type="PDBsum" id="4V6N"/>
<dbReference type="PDBsum" id="4V6O"/>
<dbReference type="PDBsum" id="4V6P"/>
<dbReference type="PDBsum" id="4V6Q"/>
<dbReference type="PDBsum" id="4V6R"/>
<dbReference type="PDBsum" id="4V6S"/>
<dbReference type="PDBsum" id="4V6T"/>
<dbReference type="PDBsum" id="4V6V"/>
<dbReference type="PDBsum" id="4V6Y"/>
<dbReference type="PDBsum" id="4V6Z"/>
<dbReference type="PDBsum" id="4V70"/>
<dbReference type="PDBsum" id="4V71"/>
<dbReference type="PDBsum" id="4V72"/>
<dbReference type="PDBsum" id="4V73"/>
<dbReference type="PDBsum" id="4V74"/>
<dbReference type="PDBsum" id="4V75"/>
<dbReference type="PDBsum" id="4V76"/>
<dbReference type="PDBsum" id="4V77"/>
<dbReference type="PDBsum" id="4V78"/>
<dbReference type="PDBsum" id="4V79"/>
<dbReference type="PDBsum" id="4V7A"/>
<dbReference type="PDBsum" id="4V7B"/>
<dbReference type="PDBsum" id="4V7C"/>
<dbReference type="PDBsum" id="4V7D"/>
<dbReference type="PDBsum" id="4V7I"/>
<dbReference type="PDBsum" id="4V7S"/>
<dbReference type="PDBsum" id="4V7T"/>
<dbReference type="PDBsum" id="4V7U"/>
<dbReference type="PDBsum" id="4V7V"/>
<dbReference type="PDBsum" id="4V85"/>
<dbReference type="PDBsum" id="4V89"/>
<dbReference type="PDBsum" id="4V9C"/>
<dbReference type="PDBsum" id="4V9D"/>
<dbReference type="PDBsum" id="4V9O"/>
<dbReference type="PDBsum" id="4V9P"/>
<dbReference type="PDBsum" id="4WF1"/>
<dbReference type="PDBsum" id="4WOI"/>
<dbReference type="PDBsum" id="4WWW"/>
<dbReference type="PDBsum" id="4YBB"/>
<dbReference type="PDBsum" id="5AFI"/>
<dbReference type="PDBsum" id="5H5U"/>
<dbReference type="PDBsum" id="5IQR"/>
<dbReference type="PDBsum" id="5IT8"/>
<dbReference type="PDBsum" id="5J5B"/>
<dbReference type="PDBsum" id="5J7L"/>
<dbReference type="PDBsum" id="5J88"/>
<dbReference type="PDBsum" id="5J8A"/>
<dbReference type="PDBsum" id="5J91"/>
<dbReference type="PDBsum" id="5JC9"/>
<dbReference type="PDBsum" id="5JTE"/>
<dbReference type="PDBsum" id="5JU8"/>
<dbReference type="PDBsum" id="5KCR"/>
<dbReference type="PDBsum" id="5KCS"/>
<dbReference type="PDBsum" id="5KPS"/>
<dbReference type="PDBsum" id="5KPV"/>
<dbReference type="PDBsum" id="5KPW"/>
<dbReference type="PDBsum" id="5KPX"/>
<dbReference type="PDBsum" id="5L3P"/>
<dbReference type="PDBsum" id="5LZA"/>
<dbReference type="PDBsum" id="5LZB"/>
<dbReference type="PDBsum" id="5LZC"/>
<dbReference type="PDBsum" id="5LZD"/>
<dbReference type="PDBsum" id="5LZE"/>
<dbReference type="PDBsum" id="5LZF"/>
<dbReference type="PDBsum" id="5MDV"/>
<dbReference type="PDBsum" id="5MDW"/>
<dbReference type="PDBsum" id="5MDY"/>
<dbReference type="PDBsum" id="5MDZ"/>
<dbReference type="PDBsum" id="5ME0"/>
<dbReference type="PDBsum" id="5ME1"/>
<dbReference type="PDBsum" id="5MGP"/>
<dbReference type="PDBsum" id="5MY1"/>
<dbReference type="PDBsum" id="5NO2"/>
<dbReference type="PDBsum" id="5NO3"/>
<dbReference type="PDBsum" id="5NO4"/>
<dbReference type="PDBsum" id="5NP6"/>
<dbReference type="PDBsum" id="5NWY"/>
<dbReference type="PDBsum" id="5O2R"/>
<dbReference type="PDBsum" id="5U4I"/>
<dbReference type="PDBsum" id="5U9F"/>
<dbReference type="PDBsum" id="5U9G"/>
<dbReference type="PDBsum" id="5UYK"/>
<dbReference type="PDBsum" id="5UYL"/>
<dbReference type="PDBsum" id="5UYM"/>
<dbReference type="PDBsum" id="5UYN"/>
<dbReference type="PDBsum" id="5UYP"/>
<dbReference type="PDBsum" id="5UYQ"/>
<dbReference type="PDBsum" id="5UZ4"/>
<dbReference type="PDBsum" id="5WDT"/>
<dbReference type="PDBsum" id="5WE4"/>
<dbReference type="PDBsum" id="5WE6"/>
<dbReference type="PDBsum" id="5WF0"/>
<dbReference type="PDBsum" id="5WFK"/>
<dbReference type="PDBsum" id="5WFS"/>
<dbReference type="PDBsum" id="6AWB"/>
<dbReference type="PDBsum" id="6AWC"/>
<dbReference type="PDBsum" id="6AWD"/>
<dbReference type="PDBsum" id="6BU8"/>
<dbReference type="PDBsum" id="6BY1"/>
<dbReference type="PDBsum" id="6C4I"/>
<dbReference type="PDBsum" id="6DNC"/>
<dbReference type="PDBsum" id="6ENF"/>
<dbReference type="PDBsum" id="6ENJ"/>
<dbReference type="PDBsum" id="6ENU"/>
<dbReference type="PDBsum" id="6GWT"/>
<dbReference type="PDBsum" id="6GXM"/>
<dbReference type="PDBsum" id="6GXN"/>
<dbReference type="PDBsum" id="6GXO"/>
<dbReference type="PDBsum" id="6GXP"/>
<dbReference type="PDBsum" id="6H4N"/>
<dbReference type="PDBsum" id="6H58"/>
<dbReference type="PDBsum" id="6HRM"/>
<dbReference type="PDBsum" id="6I7V"/>
<dbReference type="PDBsum" id="6O7K"/>
<dbReference type="PDBsum" id="6O9J"/>
<dbReference type="PDBsum" id="6O9K"/>
<dbReference type="PDBsum" id="6OFX"/>
<dbReference type="PDBsum" id="6OG7"/>
<dbReference type="PDBsum" id="6OGF"/>
<dbReference type="PDBsum" id="6OGG"/>
<dbReference type="PDBsum" id="6OGI"/>
<dbReference type="PDBsum" id="6OM6"/>
<dbReference type="PDBsum" id="6ORE"/>
<dbReference type="PDBsum" id="6ORL"/>
<dbReference type="PDBsum" id="6OSK"/>
<dbReference type="PDBsum" id="6OSQ"/>
<dbReference type="PDBsum" id="6OST"/>
<dbReference type="PDBsum" id="6OT3"/>
<dbReference type="PDBsum" id="6OUO"/>
<dbReference type="PDBsum" id="6Q98"/>
<dbReference type="PDBsum" id="6Q9A"/>
<dbReference type="PDBsum" id="6SZS"/>
<dbReference type="PDBsum" id="6TBV"/>
<dbReference type="PDBsum" id="6TC3"/>
<dbReference type="PDBsum" id="6VU3"/>
<dbReference type="PDBsum" id="6VWL"/>
<dbReference type="PDBsum" id="6VWM"/>
<dbReference type="PDBsum" id="6VWN"/>
<dbReference type="PDBsum" id="6VYQ"/>
<dbReference type="PDBsum" id="6VYR"/>
<dbReference type="PDBsum" id="6VYS"/>
<dbReference type="PDBsum" id="6VYT"/>
<dbReference type="PDBsum" id="6VYU"/>
<dbReference type="PDBsum" id="6VYW"/>
<dbReference type="PDBsum" id="6VYX"/>
<dbReference type="PDBsum" id="6VYY"/>
<dbReference type="PDBsum" id="6VYZ"/>
<dbReference type="PDBsum" id="6VZ2"/>
<dbReference type="PDBsum" id="6VZ3"/>
<dbReference type="PDBsum" id="6VZ5"/>
<dbReference type="PDBsum" id="6VZ7"/>
<dbReference type="PDBsum" id="6VZJ"/>
<dbReference type="PDBsum" id="6W6K"/>
<dbReference type="PDBsum" id="6W77"/>
<dbReference type="PDBsum" id="6W7M"/>
<dbReference type="PDBsum" id="6W7N"/>
<dbReference type="PDBsum" id="6WD0"/>
<dbReference type="PDBsum" id="6WD1"/>
<dbReference type="PDBsum" id="6WD2"/>
<dbReference type="PDBsum" id="6WD3"/>
<dbReference type="PDBsum" id="6WD4"/>
<dbReference type="PDBsum" id="6WD5"/>
<dbReference type="PDBsum" id="6WD6"/>
<dbReference type="PDBsum" id="6WD7"/>
<dbReference type="PDBsum" id="6WD8"/>
<dbReference type="PDBsum" id="6WD9"/>
<dbReference type="PDBsum" id="6WDA"/>
<dbReference type="PDBsum" id="6WDB"/>
<dbReference type="PDBsum" id="6WDC"/>
<dbReference type="PDBsum" id="6WDD"/>
<dbReference type="PDBsum" id="6WDE"/>
<dbReference type="PDBsum" id="6WDF"/>
<dbReference type="PDBsum" id="6WDG"/>
<dbReference type="PDBsum" id="6WDH"/>
<dbReference type="PDBsum" id="6WDI"/>
<dbReference type="PDBsum" id="6WDJ"/>
<dbReference type="PDBsum" id="6WDK"/>
<dbReference type="PDBsum" id="6WDL"/>
<dbReference type="PDBsum" id="6WDM"/>
<dbReference type="PDBsum" id="6WNV"/>
<dbReference type="PDBsum" id="6WNW"/>
<dbReference type="PDBsum" id="6X6T"/>
<dbReference type="PDBsum" id="6X7F"/>
<dbReference type="PDBsum" id="6X7K"/>
<dbReference type="PDBsum" id="6X9Q"/>
<dbReference type="PDBsum" id="6XDQ"/>
<dbReference type="PDBsum" id="6XDR"/>
<dbReference type="PDBsum" id="6XE0"/>
<dbReference type="PDBsum" id="6XGF"/>
<dbReference type="PDBsum" id="6XII"/>
<dbReference type="PDBsum" id="6XIJ"/>
<dbReference type="PDBsum" id="6XZA"/>
<dbReference type="PDBsum" id="6XZB"/>
<dbReference type="PDBsum" id="6Y69"/>
<dbReference type="PDBsum" id="6ZTJ"/>
<dbReference type="PDBsum" id="6ZTL"/>
<dbReference type="PDBsum" id="6ZTM"/>
<dbReference type="PDBsum" id="6ZTN"/>
<dbReference type="PDBsum" id="6ZTO"/>
<dbReference type="PDBsum" id="6ZTP"/>
<dbReference type="PDBsum" id="6ZU1"/>
<dbReference type="PDBsum" id="7ABZ"/>
<dbReference type="PDBsum" id="7AC7"/>
<dbReference type="PDBsum" id="7ACJ"/>
<dbReference type="PDBsum" id="7ACR"/>
<dbReference type="PDBsum" id="7AF3"/>
<dbReference type="PDBsum" id="7AF5"/>
<dbReference type="PDBsum" id="7AF8"/>
<dbReference type="PDBsum" id="7AFA"/>
<dbReference type="PDBsum" id="7AFD"/>
<dbReference type="PDBsum" id="7AFH"/>
<dbReference type="PDBsum" id="7AFK"/>
<dbReference type="PDBsum" id="7AFN"/>
<dbReference type="PDBsum" id="7B5K"/>
<dbReference type="PDBsum" id="7BOE"/>
<dbReference type="PDBsum" id="7BOH"/>
<dbReference type="PDBsum" id="7D6Z"/>
<dbReference type="PDBsum" id="7D80"/>
<dbReference type="PDBsum" id="7JSS"/>
<dbReference type="PDBsum" id="7JSW"/>
<dbReference type="PDBsum" id="7JSZ"/>
<dbReference type="PDBsum" id="7JT1"/>
<dbReference type="PDBsum" id="7JT2"/>
<dbReference type="PDBsum" id="7JT3"/>
<dbReference type="PDBsum" id="7K00"/>
<dbReference type="PDBsum" id="7K50"/>
<dbReference type="PDBsum" id="7K51"/>
<dbReference type="PDBsum" id="7K52"/>
<dbReference type="PDBsum" id="7K53"/>
<dbReference type="PDBsum" id="7K54"/>
<dbReference type="PDBsum" id="7K55"/>
<dbReference type="PDBsum" id="7LV0"/>
<dbReference type="PDBsum" id="7M5D"/>
<dbReference type="PDBsum" id="7N1P"/>
<dbReference type="PDBsum" id="7N2C"/>
<dbReference type="PDBsum" id="7N2U"/>
<dbReference type="PDBsum" id="7N2V"/>
<dbReference type="PDBsum" id="7N30"/>
<dbReference type="PDBsum" id="7N31"/>
<dbReference type="PDBsum" id="7NAR"/>
<dbReference type="PDBsum" id="7NAT"/>
<dbReference type="PDBsum" id="7NAU"/>
<dbReference type="PDBsum" id="7NAV"/>
<dbReference type="PDBsum" id="7NAX"/>
<dbReference type="PDBsum" id="7NBU"/>
<dbReference type="PDBsum" id="7O19"/>
<dbReference type="PDBsum" id="7O1A"/>
<dbReference type="PDBsum" id="7O1C"/>
<dbReference type="PDBsum" id="7OE0"/>
<dbReference type="PDBsum" id="7OE1"/>
<dbReference type="PDBsum" id="7OIZ"/>
<dbReference type="PDBsum" id="7OJ0"/>
<dbReference type="PDBsum" id="7P3K"/>
<dbReference type="PDBsum" id="7PJU"/>
<dbReference type="PDBsum" id="7PJV"/>
<dbReference type="PDBsum" id="7PJY"/>
<dbReference type="PDBsum" id="7QG8"/>
<dbReference type="PDBsum" id="7QGN"/>
<dbReference type="PDBsum" id="7QGR"/>
<dbReference type="PDBsum" id="7S1G"/>
<dbReference type="PDBsum" id="7S1H"/>
<dbReference type="PDBsum" id="7S1I"/>
<dbReference type="PDBsum" id="7S1J"/>
<dbReference type="PDBsum" id="7S1K"/>
<dbReference type="PDBsum" id="7SA4"/>
<dbReference type="PDBsum" id="7SS9"/>
<dbReference type="PDBsum" id="7SSD"/>
<dbReference type="PDBsum" id="7SSL"/>
<dbReference type="PDBsum" id="7SSN"/>
<dbReference type="PDBsum" id="7SSO"/>
<dbReference type="PDBsum" id="7SSW"/>
<dbReference type="PDBsum" id="7ST2"/>
<dbReference type="PDBsum" id="7ST6"/>
<dbReference type="PDBsum" id="7ST7"/>
<dbReference type="PDBsum" id="7TOS"/>
<dbReference type="PDBsum" id="7UG7"/>
<dbReference type="PDBsum" id="7UPH"/>
<dbReference type="PDBsum" id="7Y7C"/>
<dbReference type="PDBsum" id="7Y7D"/>
<dbReference type="PDBsum" id="7Y7E"/>
<dbReference type="PDBsum" id="7Y7F"/>
<dbReference type="PDBsum" id="7Y7G"/>
<dbReference type="PDBsum" id="7Y7H"/>
<dbReference type="PDBsum" id="7ZTA"/>
<dbReference type="PDBsum" id="8A3L"/>
<dbReference type="PDBsum" id="8AKN"/>
<dbReference type="PDBsum" id="8AM9"/>
<dbReference type="PDBsum" id="8AYE"/>
<dbReference type="PDBsum" id="8B0X"/>
<dbReference type="PDBsum" id="8B7Y"/>
<dbReference type="PDBsum" id="8BF7"/>
<dbReference type="PDBsum" id="8BGE"/>
<dbReference type="PDBsum" id="8BGH"/>
<dbReference type="PDBsum" id="8BH4"/>
<dbReference type="PDBsum" id="8BHJ"/>
<dbReference type="PDBsum" id="8BHL"/>
<dbReference type="PDBsum" id="8BHN"/>
<dbReference type="PDBsum" id="8BHP"/>
<dbReference type="PDBsum" id="8BIL"/>
<dbReference type="PDBsum" id="8BIM"/>
<dbReference type="PDBsum" id="8CA7"/>
<dbReference type="PDBsum" id="8CAZ"/>
<dbReference type="PDBsum" id="8CF1"/>
<dbReference type="PDBsum" id="8CF8"/>
<dbReference type="PDBsum" id="8CGI"/>
<dbReference type="PDBsum" id="8EIU"/>
<dbReference type="PDBsum" id="8EKC"/>
<dbReference type="PDBsum" id="8EMM"/>
<dbReference type="PDBsum" id="8EYQ"/>
<dbReference type="PDBsum" id="8EYT"/>
<dbReference type="PDBsum" id="8FIZ"/>
<dbReference type="PDBsum" id="8FTO"/>
<dbReference type="PDBsum" id="8FZD"/>
<dbReference type="PDBsum" id="8FZE"/>
<dbReference type="PDBsum" id="8FZF"/>
<dbReference type="PDBsum" id="8FZG"/>
<dbReference type="PDBsum" id="8FZH"/>
<dbReference type="PDBsum" id="8FZI"/>
<dbReference type="PDBsum" id="8FZJ"/>
<dbReference type="PDBsum" id="8G2U"/>
<dbReference type="PDBsum" id="8G31"/>
<dbReference type="PDBsum" id="8G34"/>
<dbReference type="PDBsum" id="8G38"/>
<dbReference type="PDBsum" id="8G6W"/>
<dbReference type="PDBsum" id="8G7P"/>
<dbReference type="PDBsum" id="8G7Q"/>
<dbReference type="PDBsum" id="8G7R"/>
<dbReference type="PDBsum" id="8G7S"/>
<dbReference type="PDBsum" id="8HSP"/>
<dbReference type="PDBsum" id="8HTZ"/>
<dbReference type="PDBsum" id="8HU1"/>
<dbReference type="PDBsum" id="8IFB"/>
<dbReference type="PDBsum" id="8IFC"/>
<dbReference type="PDBsum" id="8JSG"/>
<dbReference type="PDBsum" id="8K3O"/>
<dbReference type="PDBsum" id="8K4E"/>
<dbReference type="PDBsum" id="8P16"/>
<dbReference type="PDBsum" id="8P17"/>
<dbReference type="PDBsum" id="8P18"/>
<dbReference type="PDBsum" id="8PEG"/>
<dbReference type="PDBsum" id="8PHJ"/>
<dbReference type="PDBsum" id="8PKL"/>
<dbReference type="PDBsum" id="8PVA"/>
<dbReference type="PDBsum" id="8Q4F"/>
<dbReference type="PDBsum" id="8QBT"/>
<dbReference type="PDBsum" id="8QK7"/>
<dbReference type="PDBsum" id="8QOA"/>
<dbReference type="PDBsum" id="8R3V"/>
<dbReference type="PDBsum" id="8R6C"/>
<dbReference type="PDBsum" id="8R8M"/>
<dbReference type="PDBsum" id="8RCL"/>
<dbReference type="PDBsum" id="8RCM"/>
<dbReference type="PDBsum" id="8RCS"/>
<dbReference type="PDBsum" id="8RCT"/>
<dbReference type="PDBsum" id="8SYL"/>
<dbReference type="PDBsum" id="8T5D"/>
<dbReference type="PDBsum" id="8T5H"/>
<dbReference type="PDBsum" id="8UPO"/>
<dbReference type="PDBsum" id="8UPR"/>
<dbReference type="PDBsum" id="8UQL"/>
<dbReference type="PDBsum" id="8UQM"/>
<dbReference type="PDBsum" id="8UQP"/>
<dbReference type="PDBsum" id="8UR0"/>
<dbReference type="PDBsum" id="8URH"/>
<dbReference type="PDBsum" id="8URI"/>
<dbReference type="PDBsum" id="8URX"/>
<dbReference type="PDBsum" id="8URY"/>
<dbReference type="PDBsum" id="8VS9"/>
<dbReference type="PDBsum" id="8VSA"/>
<dbReference type="PDBsum" id="8YUO"/>
<dbReference type="PDBsum" id="8YUP"/>
<dbReference type="PDBsum" id="8YUQ"/>
<dbReference type="PDBsum" id="8YUR"/>
<dbReference type="PDBsum" id="8YUS"/>
<dbReference type="PDBsum" id="9DUK"/>
<dbReference type="PDBsum" id="9DUL"/>
<dbReference type="PDBsum" id="9FBV"/>
<dbReference type="PDBsum" id="9GFT"/>
<dbReference type="PDBsum" id="9GGR"/>
<dbReference type="PDBsum" id="9GUP"/>
<dbReference type="PDBsum" id="9GUQ"/>
<dbReference type="PDBsum" id="9GUS"/>
<dbReference type="PDBsum" id="9GUT"/>
<dbReference type="PDBsum" id="9GUU"/>
<dbReference type="PDBsum" id="9GUV"/>
<dbReference type="PDBsum" id="9GUW"/>
<dbReference type="PDBsum" id="9GUX"/>
<dbReference type="PDBsum" id="9MOR"/>
<dbReference type="PDBsum" id="9MQ4"/>
<dbReference type="EMDB" id="EMD-0076"/>
<dbReference type="EMDB" id="EMD-0080"/>
<dbReference type="EMDB" id="EMD-0081"/>
<dbReference type="EMDB" id="EMD-0082"/>
<dbReference type="EMDB" id="EMD-0083"/>
<dbReference type="EMDB" id="EMD-0137"/>
<dbReference type="EMDB" id="EMD-0139"/>
<dbReference type="EMDB" id="EMD-0261"/>
<dbReference type="EMDB" id="EMD-10353"/>
<dbReference type="EMDB" id="EMD-10453"/>
<dbReference type="EMDB" id="EMD-10458"/>
<dbReference type="EMDB" id="EMD-10656"/>
<dbReference type="EMDB" id="EMD-10657"/>
<dbReference type="EMDB" id="EMD-10705"/>
<dbReference type="EMDB" id="EMD-11419"/>
<dbReference type="EMDB" id="EMD-11710"/>
<dbReference type="EMDB" id="EMD-11713"/>
<dbReference type="EMDB" id="EMD-11717"/>
<dbReference type="EMDB" id="EMD-11718"/>
<dbReference type="EMDB" id="EMD-12035"/>
<dbReference type="EMDB" id="EMD-12240"/>
<dbReference type="EMDB" id="EMD-12243"/>
<dbReference type="EMDB" id="EMD-12245"/>
<dbReference type="EMDB" id="EMD-12247"/>
<dbReference type="EMDB" id="EMD-12248"/>
<dbReference type="EMDB" id="EMD-12249"/>
<dbReference type="EMDB" id="EMD-12261"/>
<dbReference type="EMDB" id="EMD-12693"/>
<dbReference type="EMDB" id="EMD-12694"/>
<dbReference type="EMDB" id="EMD-12695"/>
<dbReference type="EMDB" id="EMD-12936"/>
<dbReference type="EMDB" id="EMD-12937"/>
<dbReference type="EMDB" id="EMD-13180"/>
<dbReference type="EMDB" id="EMD-13461"/>
<dbReference type="EMDB" id="EMD-13464"/>
<dbReference type="EMDB" id="EMD-13952"/>
<dbReference type="EMDB" id="EMD-14956"/>
<dbReference type="EMDB" id="EMD-15116"/>
<dbReference type="EMDB" id="EMD-15712"/>
<dbReference type="EMDB" id="EMD-15793"/>
<dbReference type="EMDB" id="EMD-15905"/>
<dbReference type="EMDB" id="EMD-16015"/>
<dbReference type="EMDB" id="EMD-16029"/>
<dbReference type="EMDB" id="EMD-16031"/>
<dbReference type="EMDB" id="EMD-16047"/>
<dbReference type="EMDB" id="EMD-16057"/>
<dbReference type="EMDB" id="EMD-16059"/>
<dbReference type="EMDB" id="EMD-16062"/>
<dbReference type="EMDB" id="EMD-16065"/>
<dbReference type="EMDB" id="EMD-16081"/>
<dbReference type="EMDB" id="EMD-16082"/>
<dbReference type="EMDB" id="EMD-16520"/>
<dbReference type="EMDB" id="EMD-16536"/>
<dbReference type="EMDB" id="EMD-16615"/>
<dbReference type="EMDB" id="EMD-16620"/>
<dbReference type="EMDB" id="EMD-16644"/>
<dbReference type="EMDB" id="EMD-17346"/>
<dbReference type="EMDB" id="EMD-17347"/>
<dbReference type="EMDB" id="EMD-17348"/>
<dbReference type="EMDB" id="EMD-17631"/>
<dbReference type="EMDB" id="EMD-17667"/>
<dbReference type="EMDB" id="EMD-17743"/>
<dbReference type="EMDB" id="EMD-17959"/>
<dbReference type="EMDB" id="EMD-18145"/>
<dbReference type="EMDB" id="EMD-18320"/>
<dbReference type="EMDB" id="EMD-18458"/>
<dbReference type="EMDB" id="EMD-18534"/>
<dbReference type="EMDB" id="EMD-18875"/>
<dbReference type="EMDB" id="EMD-18950"/>
<dbReference type="EMDB" id="EMD-19004"/>
<dbReference type="EMDB" id="EMD-19054"/>
<dbReference type="EMDB" id="EMD-19055"/>
<dbReference type="EMDB" id="EMD-19058"/>
<dbReference type="EMDB" id="EMD-19059"/>
<dbReference type="EMDB" id="EMD-20048"/>
<dbReference type="EMDB" id="EMD-20052"/>
<dbReference type="EMDB" id="EMD-21420"/>
<dbReference type="EMDB" id="EMD-21421"/>
<dbReference type="EMDB" id="EMD-21422"/>
<dbReference type="EMDB" id="EMD-21558"/>
<dbReference type="EMDB" id="EMD-21569"/>
<dbReference type="EMDB" id="EMD-21571"/>
<dbReference type="EMDB" id="EMD-21572"/>
<dbReference type="EMDB" id="EMD-21625"/>
<dbReference type="EMDB" id="EMD-21630"/>
<dbReference type="EMDB" id="EMD-21631"/>
<dbReference type="EMDB" id="EMD-21632"/>
<dbReference type="EMDB" id="EMD-21633"/>
<dbReference type="EMDB" id="EMD-21634"/>
<dbReference type="EMDB" id="EMD-21635"/>
<dbReference type="EMDB" id="EMD-21636"/>
<dbReference type="EMDB" id="EMD-21637"/>
<dbReference type="EMDB" id="EMD-21638"/>
<dbReference type="EMDB" id="EMD-21639"/>
<dbReference type="EMDB" id="EMD-21640"/>
<dbReference type="EMDB" id="EMD-21641"/>
<dbReference type="EMDB" id="EMD-21857"/>
<dbReference type="EMDB" id="EMD-21858"/>
<dbReference type="EMDB" id="EMD-22143"/>
<dbReference type="EMDB" id="EMD-22459"/>
<dbReference type="EMDB" id="EMD-22461"/>
<dbReference type="EMDB" id="EMD-22464"/>
<dbReference type="EMDB" id="EMD-22466"/>
<dbReference type="EMDB" id="EMD-22469"/>
<dbReference type="EMDB" id="EMD-22472"/>
<dbReference type="EMDB" id="EMD-22669"/>
<dbReference type="EMDB" id="EMD-22670"/>
<dbReference type="EMDB" id="EMD-22671"/>
<dbReference type="EMDB" id="EMD-22672"/>
<dbReference type="EMDB" id="EMD-22673"/>
<dbReference type="EMDB" id="EMD-22674"/>
<dbReference type="EMDB" id="EMD-23528"/>
<dbReference type="EMDB" id="EMD-24120"/>
<dbReference type="EMDB" id="EMD-24132"/>
<dbReference type="EMDB" id="EMD-24133"/>
<dbReference type="EMDB" id="EMD-24134"/>
<dbReference type="EMDB" id="EMD-24135"/>
<dbReference type="EMDB" id="EMD-24136"/>
<dbReference type="EMDB" id="EMD-24803"/>
<dbReference type="EMDB" id="EMD-25405"/>
<dbReference type="EMDB" id="EMD-25407"/>
<dbReference type="EMDB" id="EMD-25409"/>
<dbReference type="EMDB" id="EMD-25410"/>
<dbReference type="EMDB" id="EMD-25411"/>
<dbReference type="EMDB" id="EMD-25415"/>
<dbReference type="EMDB" id="EMD-25418"/>
<dbReference type="EMDB" id="EMD-25420"/>
<dbReference type="EMDB" id="EMD-25421"/>
<dbReference type="EMDB" id="EMD-30598"/>
<dbReference type="EMDB" id="EMD-30611"/>
<dbReference type="EMDB" id="EMD-33660"/>
<dbReference type="EMDB" id="EMD-33661"/>
<dbReference type="EMDB" id="EMD-33662"/>
<dbReference type="EMDB" id="EMD-33663"/>
<dbReference type="EMDB" id="EMD-33664"/>
<dbReference type="EMDB" id="EMD-33665"/>
<dbReference type="EMDB" id="EMD-3489"/>
<dbReference type="EMDB" id="EMD-3490"/>
<dbReference type="EMDB" id="EMD-3492"/>
<dbReference type="EMDB" id="EMD-3493"/>
<dbReference type="EMDB" id="EMD-3494"/>
<dbReference type="EMDB" id="EMD-3495"/>
<dbReference type="EMDB" id="EMD-35001"/>
<dbReference type="EMDB" id="EMD-35020"/>
<dbReference type="EMDB" id="EMD-35022"/>
<dbReference type="EMDB" id="EMD-3508"/>
<dbReference type="EMDB" id="EMD-35411"/>
<dbReference type="EMDB" id="EMD-35412"/>
<dbReference type="EMDB" id="EMD-3580"/>
<dbReference type="EMDB" id="EMD-3661"/>
<dbReference type="EMDB" id="EMD-36619"/>
<dbReference type="EMDB" id="EMD-3662"/>
<dbReference type="EMDB" id="EMD-3663"/>
<dbReference type="EMDB" id="EMD-36854"/>
<dbReference type="EMDB" id="EMD-36883"/>
<dbReference type="EMDB" id="EMD-3713"/>
<dbReference type="EMDB" id="EMD-3730"/>
<dbReference type="EMDB" id="EMD-3898"/>
<dbReference type="EMDB" id="EMD-3899"/>
<dbReference type="EMDB" id="EMD-3903"/>
<dbReference type="EMDB" id="EMD-39577"/>
<dbReference type="EMDB" id="EMD-39578"/>
<dbReference type="EMDB" id="EMD-39579"/>
<dbReference type="EMDB" id="EMD-39580"/>
<dbReference type="EMDB" id="EMD-39581"/>
<dbReference type="EMDB" id="EMD-4001"/>
<dbReference type="EMDB" id="EMD-4121"/>
<dbReference type="EMDB" id="EMD-4122"/>
<dbReference type="EMDB" id="EMD-4123"/>
<dbReference type="EMDB" id="EMD-4124"/>
<dbReference type="EMDB" id="EMD-4125"/>
<dbReference type="EMDB" id="EMD-4126"/>
<dbReference type="EMDB" id="EMD-4477"/>
<dbReference type="EMDB" id="EMD-4478"/>
<dbReference type="EMDB" id="EMD-50296"/>
<dbReference type="EMDB" id="EMD-51318"/>
<dbReference type="EMDB" id="EMD-51340"/>
<dbReference type="EMDB" id="EMD-51615"/>
<dbReference type="EMDB" id="EMD-51616"/>
<dbReference type="EMDB" id="EMD-51618"/>
<dbReference type="EMDB" id="EMD-51619"/>
<dbReference type="EMDB" id="EMD-51620"/>
<dbReference type="EMDB" id="EMD-51621"/>
<dbReference type="EMDB" id="EMD-51622"/>
<dbReference type="EMDB" id="EMD-51623"/>
<dbReference type="EMDB" id="EMD-6667"/>
<dbReference type="EMDB" id="EMD-7289"/>
<dbReference type="EMDB" id="EMD-8107"/>
<dbReference type="EMDB" id="EMD-8175"/>
<dbReference type="EMDB" id="EMD-8176"/>
<dbReference type="EMDB" id="EMD-8237"/>
<dbReference type="EMDB" id="EMD-8238"/>
<dbReference type="EMDB" id="EMD-8279"/>
<dbReference type="EMDB" id="EMD-8280"/>
<dbReference type="EMDB" id="EMD-8281"/>
<dbReference type="EMDB" id="EMD-8282"/>
<dbReference type="EMDB" id="EMD-8505"/>
<dbReference type="EMDB" id="EMD-8615"/>
<dbReference type="EMDB" id="EMD-8616"/>
<dbReference type="EMDB" id="EMD-8617"/>
<dbReference type="EMDB" id="EMD-8618"/>
<dbReference type="EMDB" id="EMD-8619"/>
<dbReference type="EMDB" id="EMD-8620"/>
<dbReference type="EMDB" id="EMD-8813"/>
<dbReference type="EMDB" id="EMD-8814"/>
<dbReference type="EMDB" id="EMD-8815"/>
<dbReference type="EMDB" id="EMD-8828"/>
<dbReference type="SMR" id="P0A7U3"/>
<dbReference type="BioGRID" id="4261288">
    <property type="interactions" value="6"/>
</dbReference>
<dbReference type="BioGRID" id="852123">
    <property type="interactions" value="4"/>
</dbReference>
<dbReference type="ComplexPortal" id="CPX-3802">
    <property type="entry name" value="30S small ribosomal subunit"/>
</dbReference>
<dbReference type="DIP" id="DIP-47904N"/>
<dbReference type="FunCoup" id="P0A7U3">
    <property type="interactions" value="837"/>
</dbReference>
<dbReference type="IntAct" id="P0A7U3">
    <property type="interactions" value="47"/>
</dbReference>
<dbReference type="STRING" id="511145.b3316"/>
<dbReference type="DrugBank" id="DB09093">
    <property type="generic name" value="Chlortetracycline"/>
</dbReference>
<dbReference type="DrugBank" id="DB12455">
    <property type="generic name" value="Omadacycline"/>
</dbReference>
<dbReference type="DrugBank" id="DB00759">
    <property type="generic name" value="Tetracycline"/>
</dbReference>
<dbReference type="DrugBank" id="DB00560">
    <property type="generic name" value="Tigecycline"/>
</dbReference>
<dbReference type="jPOST" id="P0A7U3"/>
<dbReference type="PaxDb" id="511145-b3316"/>
<dbReference type="EnsemblBacteria" id="AAC76341">
    <property type="protein sequence ID" value="AAC76341"/>
    <property type="gene ID" value="b3316"/>
</dbReference>
<dbReference type="GeneID" id="947811"/>
<dbReference type="GeneID" id="98390438"/>
<dbReference type="KEGG" id="ecj:JW3278"/>
<dbReference type="KEGG" id="eco:b3316"/>
<dbReference type="KEGG" id="ecoc:C3026_18020"/>
<dbReference type="PATRIC" id="fig|1411691.4.peg.3415"/>
<dbReference type="EchoBASE" id="EB0911"/>
<dbReference type="eggNOG" id="COG0185">
    <property type="taxonomic scope" value="Bacteria"/>
</dbReference>
<dbReference type="HOGENOM" id="CLU_144911_0_1_6"/>
<dbReference type="InParanoid" id="P0A7U3"/>
<dbReference type="OMA" id="KGPFVDP"/>
<dbReference type="OrthoDB" id="9797833at2"/>
<dbReference type="PhylomeDB" id="P0A7U3"/>
<dbReference type="BioCyc" id="EcoCyc:EG10918-MONOMER"/>
<dbReference type="BioCyc" id="MetaCyc:EG10918-MONOMER"/>
<dbReference type="EvolutionaryTrace" id="P0A7U3"/>
<dbReference type="PRO" id="PR:P0A7U3"/>
<dbReference type="Proteomes" id="UP000000625">
    <property type="component" value="Chromosome"/>
</dbReference>
<dbReference type="GO" id="GO:0005737">
    <property type="term" value="C:cytoplasm"/>
    <property type="evidence" value="ECO:0000314"/>
    <property type="project" value="ComplexPortal"/>
</dbReference>
<dbReference type="GO" id="GO:0005829">
    <property type="term" value="C:cytosol"/>
    <property type="evidence" value="ECO:0000314"/>
    <property type="project" value="EcoCyc"/>
</dbReference>
<dbReference type="GO" id="GO:0022627">
    <property type="term" value="C:cytosolic small ribosomal subunit"/>
    <property type="evidence" value="ECO:0000314"/>
    <property type="project" value="EcoliWiki"/>
</dbReference>
<dbReference type="GO" id="GO:0019843">
    <property type="term" value="F:rRNA binding"/>
    <property type="evidence" value="ECO:0007669"/>
    <property type="project" value="UniProtKB-UniRule"/>
</dbReference>
<dbReference type="GO" id="GO:0003735">
    <property type="term" value="F:structural constituent of ribosome"/>
    <property type="evidence" value="ECO:0000318"/>
    <property type="project" value="GO_Central"/>
</dbReference>
<dbReference type="GO" id="GO:0000049">
    <property type="term" value="F:tRNA binding"/>
    <property type="evidence" value="ECO:0007669"/>
    <property type="project" value="UniProtKB-KW"/>
</dbReference>
<dbReference type="GO" id="GO:0002181">
    <property type="term" value="P:cytoplasmic translation"/>
    <property type="evidence" value="ECO:0000303"/>
    <property type="project" value="ComplexPortal"/>
</dbReference>
<dbReference type="GO" id="GO:0000028">
    <property type="term" value="P:ribosomal small subunit assembly"/>
    <property type="evidence" value="ECO:0000318"/>
    <property type="project" value="GO_Central"/>
</dbReference>
<dbReference type="DisProt" id="DP00147"/>
<dbReference type="FunFam" id="3.30.860.10:FF:000001">
    <property type="entry name" value="30S ribosomal protein S19"/>
    <property type="match status" value="1"/>
</dbReference>
<dbReference type="Gene3D" id="3.30.860.10">
    <property type="entry name" value="30s Ribosomal Protein S19, Chain A"/>
    <property type="match status" value="1"/>
</dbReference>
<dbReference type="HAMAP" id="MF_00531">
    <property type="entry name" value="Ribosomal_uS19"/>
    <property type="match status" value="1"/>
</dbReference>
<dbReference type="InterPro" id="IPR002222">
    <property type="entry name" value="Ribosomal_uS19"/>
</dbReference>
<dbReference type="InterPro" id="IPR005732">
    <property type="entry name" value="Ribosomal_uS19_bac-type"/>
</dbReference>
<dbReference type="InterPro" id="IPR020934">
    <property type="entry name" value="Ribosomal_uS19_CS"/>
</dbReference>
<dbReference type="InterPro" id="IPR023575">
    <property type="entry name" value="Ribosomal_uS19_SF"/>
</dbReference>
<dbReference type="NCBIfam" id="TIGR01050">
    <property type="entry name" value="rpsS_bact"/>
    <property type="match status" value="1"/>
</dbReference>
<dbReference type="PANTHER" id="PTHR11880">
    <property type="entry name" value="RIBOSOMAL PROTEIN S19P FAMILY MEMBER"/>
    <property type="match status" value="1"/>
</dbReference>
<dbReference type="PANTHER" id="PTHR11880:SF8">
    <property type="entry name" value="SMALL RIBOSOMAL SUBUNIT PROTEIN US19M"/>
    <property type="match status" value="1"/>
</dbReference>
<dbReference type="Pfam" id="PF00203">
    <property type="entry name" value="Ribosomal_S19"/>
    <property type="match status" value="1"/>
</dbReference>
<dbReference type="PIRSF" id="PIRSF002144">
    <property type="entry name" value="Ribosomal_S19"/>
    <property type="match status" value="1"/>
</dbReference>
<dbReference type="PRINTS" id="PR00975">
    <property type="entry name" value="RIBOSOMALS19"/>
</dbReference>
<dbReference type="SUPFAM" id="SSF54570">
    <property type="entry name" value="Ribosomal protein S19"/>
    <property type="match status" value="1"/>
</dbReference>
<dbReference type="PROSITE" id="PS00323">
    <property type="entry name" value="RIBOSOMAL_S19"/>
    <property type="match status" value="1"/>
</dbReference>
<gene>
    <name type="primary">rpsS</name>
    <name type="ordered locus">b3316</name>
    <name type="ordered locus">JW3278</name>
</gene>
<reference key="1">
    <citation type="journal article" date="1985" name="Nucleic Acids Res.">
        <title>Structure of the Escherichia coli S10 ribosomal protein operon.</title>
        <authorList>
            <person name="Zurawski G."/>
            <person name="Zurawski S.M."/>
        </authorList>
    </citation>
    <scope>NUCLEOTIDE SEQUENCE [GENOMIC DNA]</scope>
</reference>
<reference key="2">
    <citation type="journal article" date="1997" name="Science">
        <title>The complete genome sequence of Escherichia coli K-12.</title>
        <authorList>
            <person name="Blattner F.R."/>
            <person name="Plunkett G. III"/>
            <person name="Bloch C.A."/>
            <person name="Perna N.T."/>
            <person name="Burland V."/>
            <person name="Riley M."/>
            <person name="Collado-Vides J."/>
            <person name="Glasner J.D."/>
            <person name="Rode C.K."/>
            <person name="Mayhew G.F."/>
            <person name="Gregor J."/>
            <person name="Davis N.W."/>
            <person name="Kirkpatrick H.A."/>
            <person name="Goeden M.A."/>
            <person name="Rose D.J."/>
            <person name="Mau B."/>
            <person name="Shao Y."/>
        </authorList>
    </citation>
    <scope>NUCLEOTIDE SEQUENCE [LARGE SCALE GENOMIC DNA]</scope>
    <source>
        <strain>K12 / MG1655 / ATCC 47076</strain>
    </source>
</reference>
<reference key="3">
    <citation type="journal article" date="2006" name="Mol. Syst. Biol.">
        <title>Highly accurate genome sequences of Escherichia coli K-12 strains MG1655 and W3110.</title>
        <authorList>
            <person name="Hayashi K."/>
            <person name="Morooka N."/>
            <person name="Yamamoto Y."/>
            <person name="Fujita K."/>
            <person name="Isono K."/>
            <person name="Choi S."/>
            <person name="Ohtsubo E."/>
            <person name="Baba T."/>
            <person name="Wanner B.L."/>
            <person name="Mori H."/>
            <person name="Horiuchi T."/>
        </authorList>
    </citation>
    <scope>NUCLEOTIDE SEQUENCE [LARGE SCALE GENOMIC DNA]</scope>
    <source>
        <strain>K12 / W3110 / ATCC 27325 / DSM 5911</strain>
    </source>
</reference>
<reference key="4">
    <citation type="journal article" date="1978" name="FEBS Lett.">
        <title>Primary structure of protein S19 from the small ribosomal subunit of Escherichia coli.</title>
        <authorList>
            <person name="Yaguchi M."/>
            <person name="Wittmann H.G."/>
        </authorList>
    </citation>
    <scope>PROTEIN SEQUENCE OF 2-92</scope>
    <scope>SUBUNIT</scope>
    <source>
        <strain>K</strain>
    </source>
</reference>
<reference key="5">
    <citation type="journal article" date="1988" name="J. Biol. Chem.">
        <title>Identification of a cross-link in the Escherichia coli ribosomal protein pair S13-S19 at the amino acid level.</title>
        <authorList>
            <person name="Pohl T."/>
            <person name="Wittmann-Liebold B."/>
        </authorList>
    </citation>
    <scope>PROTEIN SEQUENCE OF 66-70</scope>
    <scope>SUBUNIT</scope>
    <scope>CROSS-LINKING TO S13</scope>
    <source>
        <strain>K12 / A19</strain>
    </source>
</reference>
<reference key="6">
    <citation type="journal article" date="1995" name="Nucleic Acids Res.">
        <title>The ribosomal neighbourhood of the central fold of tRNA: cross-links from position 47 of tRNA located at the A, P or E site.</title>
        <authorList>
            <person name="Osswald M."/>
            <person name="Doering T."/>
            <person name="Brimacombe R."/>
        </authorList>
    </citation>
    <scope>CROSS-LINKING TO THE TRNA CENTRAL FOLD</scope>
    <source>
        <strain>MRE-600</strain>
    </source>
</reference>
<reference key="7">
    <citation type="journal article" date="2014" name="Curr. Opin. Struct. Biol.">
        <title>A new system for naming ribosomal proteins.</title>
        <authorList>
            <person name="Ban N."/>
            <person name="Beckmann R."/>
            <person name="Cate J.H.D."/>
            <person name="Dinman J.D."/>
            <person name="Dragon F."/>
            <person name="Ellis S.R."/>
            <person name="Lafontaine D.L.J."/>
            <person name="Lindahl L."/>
            <person name="Liljas A."/>
            <person name="Lipton J.M."/>
            <person name="McAlear M.A."/>
            <person name="Moore P.B."/>
            <person name="Noller H.F."/>
            <person name="Ortega J."/>
            <person name="Panse V.G."/>
            <person name="Ramakrishnan V."/>
            <person name="Spahn C.M.T."/>
            <person name="Steitz T.A."/>
            <person name="Tchorzewski M."/>
            <person name="Tollervey D."/>
            <person name="Warren A.J."/>
            <person name="Williamson J.R."/>
            <person name="Wilson D."/>
            <person name="Yonath A."/>
            <person name="Yusupov M."/>
        </authorList>
    </citation>
    <scope>NOMENCLATURE</scope>
</reference>
<reference key="8">
    <citation type="journal article" date="2004" name="RNA">
        <title>The PRC-barrel domain of the ribosome maturation protein RimM mediates binding to ribosomal protein S19 in the 30S ribosomal subunits.</title>
        <authorList>
            <person name="Loevgren J.M."/>
            <person name="Bylund G.O."/>
            <person name="Srivastava M.K."/>
            <person name="Lundberg L.A.C."/>
            <person name="Persson O.P."/>
            <person name="Wingsle G."/>
            <person name="Wikstroem P.M."/>
        </authorList>
    </citation>
    <scope>ABILITY OF VARIANT MW145 TO SUPPRESS A RIMM DELETION</scope>
    <source>
        <strain>MW100</strain>
    </source>
</reference>
<reference key="9">
    <citation type="journal article" date="1999" name="Anal. Biochem.">
        <title>Observation of Escherichia coli ribosomal proteins and their posttranslational modifications by mass spectrometry.</title>
        <authorList>
            <person name="Arnold R.J."/>
            <person name="Reilly J.P."/>
        </authorList>
    </citation>
    <scope>MASS SPECTROMETRY</scope>
    <scope>SUBUNIT</scope>
    <source>
        <strain>K12 / ATCC 25404 / DSM 5698 / NCIMB 11290</strain>
    </source>
</reference>
<reference key="10">
    <citation type="journal article" date="2002" name="Nat. Struct. Biol.">
        <title>All-atom homology model of the Escherichia coli 30S ribosomal subunit.</title>
        <authorList>
            <person name="Tung C.-S."/>
            <person name="Joseph S."/>
            <person name="Sanbonmatsu K.Y."/>
        </authorList>
    </citation>
    <scope>3D-STRUCTURE MODELING</scope>
    <scope>SUBUNIT</scope>
</reference>
<reference key="11">
    <citation type="journal article" date="2003" name="Cell">
        <title>Study of the structural dynamics of the E. coli 70S ribosome using real-space refinement.</title>
        <authorList>
            <person name="Gao H."/>
            <person name="Sengupta J."/>
            <person name="Valle M."/>
            <person name="Korostelev A."/>
            <person name="Eswar N."/>
            <person name="Stagg S.M."/>
            <person name="Van Roey P."/>
            <person name="Agrawal R.K."/>
            <person name="Harvey S.C."/>
            <person name="Sali A."/>
            <person name="Chapman M.S."/>
            <person name="Frank J."/>
        </authorList>
    </citation>
    <scope>STRUCTURE BY ELECTRON MICROSCOPY (11.50 ANGSTROMS)</scope>
    <scope>SUBUNIT</scope>
    <scope>INTERSUBUNIT BRIDGE FORMATION</scope>
    <source>
        <strain>MRE-600</strain>
    </source>
</reference>
<reference key="12">
    <citation type="journal article" date="2003" name="Cell">
        <title>Locking and unlocking of ribosomal motions.</title>
        <authorList>
            <person name="Valle M."/>
            <person name="Zavialov A."/>
            <person name="Sengupta J."/>
            <person name="Rawat U."/>
            <person name="Ehrenberg M."/>
            <person name="Frank J."/>
        </authorList>
    </citation>
    <scope>3D-STRUCTURE MODELING OF RIBOSOMAL COMPLEXES INCLUDING BRIDGE CHANGES UPON TRANSLOCATION</scope>
    <scope>SUBUNIT</scope>
</reference>
<reference key="13">
    <citation type="journal article" date="2005" name="Science">
        <title>Structures of the bacterial ribosome at 3.5 A resolution.</title>
        <authorList>
            <person name="Schuwirth B.S."/>
            <person name="Borovinskaya M.A."/>
            <person name="Hau C.W."/>
            <person name="Zhang W."/>
            <person name="Vila-Sanjurjo A."/>
            <person name="Holton J.M."/>
            <person name="Cate J.H.D."/>
        </authorList>
    </citation>
    <scope>X-RAY CRYSTALLOGRAPHY (3.46 ANGSTROMS) OF 2 DIFFERENT RIBOSOME STRUCTURES INCLUDING THE INTERSUBUNIT BRIDGE B1B</scope>
    <scope>SUBUNIT</scope>
    <source>
        <strain>MRE-600</strain>
    </source>
</reference>
<reference key="14">
    <citation type="journal article" date="2017" name="Nature">
        <title>Mechanistic insights into the alternative translation termination by ArfA and RF2.</title>
        <authorList>
            <person name="Ma C."/>
            <person name="Kurita D."/>
            <person name="Li N."/>
            <person name="Chen Y."/>
            <person name="Himeno H."/>
            <person name="Gao N."/>
        </authorList>
    </citation>
    <scope>STRUCTURE BY ELECTRON MICROSCOPY (3.0 ANGSTROMS) OF 70S RIBOSOME IN COMPLEX WITH ARFA AND RF2</scope>
    <scope>SUBUNIT</scope>
</reference>
<reference key="15">
    <citation type="journal article" date="2017" name="Nature">
        <title>Structural basis for ArfA-RF2-mediated translation termination on mRNAs lacking stop codons.</title>
        <authorList>
            <person name="Huter P."/>
            <person name="Mueller C."/>
            <person name="Beckert B."/>
            <person name="Arenz S."/>
            <person name="Berninghausen O."/>
            <person name="Beckmann R."/>
            <person name="Wilson D.N."/>
        </authorList>
    </citation>
    <scope>STRUCTURE BY ELECTRON MICROSCOPY (3.1 ANGSTROMS) OF 70S RIBOSOME IN COMPLEX WITH ARFA AND RF2</scope>
    <scope>SUBUNIT</scope>
</reference>
<reference key="16">
    <citation type="journal article" date="2016" name="Science">
        <title>Translational termination without a stop codon.</title>
        <authorList>
            <person name="James N.R."/>
            <person name="Brown A."/>
            <person name="Gordiyenko Y."/>
            <person name="Ramakrishnan V."/>
        </authorList>
    </citation>
    <scope>STRUCTURE BY ELECTRON MICROSCOPY (2.97 ANGSTROMS) OF 70S RIBOSOME IN COMPLEX WITH ARFA AND RF2</scope>
    <scope>SUBUNIT</scope>
</reference>
<reference key="17">
    <citation type="journal article" date="2017" name="Nature">
        <title>Structural basis of co-translational quality control by ArfA and RF2 bound to ribosome.</title>
        <authorList>
            <person name="Zeng F."/>
            <person name="Chen Y."/>
            <person name="Remis J."/>
            <person name="Shekhar M."/>
            <person name="Phillips J.C."/>
            <person name="Tajkhorshid E."/>
            <person name="Jin H."/>
        </authorList>
    </citation>
    <scope>STRUCTURE BY ELECTRON MICROSCOPY (3.52 ANGSTROMS) OF 70S RIBOSOME IN COMPLEX WITH ARFA AND RF2</scope>
    <scope>SUBUNIT</scope>
</reference>
<keyword id="KW-0002">3D-structure</keyword>
<keyword id="KW-0903">Direct protein sequencing</keyword>
<keyword id="KW-1185">Reference proteome</keyword>
<keyword id="KW-0687">Ribonucleoprotein</keyword>
<keyword id="KW-0689">Ribosomal protein</keyword>
<keyword id="KW-0694">RNA-binding</keyword>
<keyword id="KW-0699">rRNA-binding</keyword>
<keyword id="KW-0820">tRNA-binding</keyword>
<sequence>MPRSLKKGPFIDLHLLKKVEKAVESGDKKPLRTWSRRSTIFPNMIGLTIAVHNGRQHVPVFVTDEMVGHKLGEFAPTRTYRGHAADKKAKKK</sequence>
<name>RS19_ECOLI</name>
<comment type="function">
    <text evidence="3 4 6">In the E.coli 70S ribosome in the initiation state (PubMed:12809609) it has been modeled to contact the 23S rRNA of the 50S subunit forming part of bridge B1a; this bridge is broken in the model with bound EF-G. The 23S rRNA contact site in bridge B1a is modeled to differ in different ribosomal states (PubMed:12859903), contacting alternately S13 or S19. In the 3.5 angstroms resolved ribosome structures (PubMed:16272117) the contacts between L5, S13 and S19 bridge B1b are different, confirming the dynamic nature of this interaction. Bridge B1a is not visible in the crystallized ribosomes due to 23S rRNA disorder.</text>
</comment>
<comment type="function">
    <text>Protein S19 forms a complex with S13 that binds strongly to the 16S ribosomal RNA. Contacts the A site tRNA.</text>
</comment>
<comment type="subunit">
    <text evidence="1 2 3 4 6 7 8 9 10 11">Part of the 30S ribosomal subunit (PubMed:10094780, PubMed:12244297, PubMed:12809609, PubMed:12859903, PubMed:16272117, PubMed:27906160, PubMed:27906161, PubMed:27934701, PubMed:3279034, PubMed:348496). Binds S13 and L5 and cross-links to the A site tRNA (PubMed:12809609, PubMed:12859903, PubMed:16272117).</text>
</comment>
<comment type="mass spectrometry"/>
<comment type="similarity">
    <text evidence="13">Belongs to the universal ribosomal protein uS19 family.</text>
</comment>
<organism>
    <name type="scientific">Escherichia coli (strain K12)</name>
    <dbReference type="NCBI Taxonomy" id="83333"/>
    <lineage>
        <taxon>Bacteria</taxon>
        <taxon>Pseudomonadati</taxon>
        <taxon>Pseudomonadota</taxon>
        <taxon>Gammaproteobacteria</taxon>
        <taxon>Enterobacterales</taxon>
        <taxon>Enterobacteriaceae</taxon>
        <taxon>Escherichia</taxon>
    </lineage>
</organism>
<proteinExistence type="evidence at protein level"/>
<protein>
    <recommendedName>
        <fullName evidence="12">Small ribosomal subunit protein uS19</fullName>
    </recommendedName>
    <alternativeName>
        <fullName>30S ribosomal protein S19</fullName>
    </alternativeName>
</protein>
<feature type="initiator methionine" description="Removed" evidence="11">
    <location>
        <position position="1"/>
    </location>
</feature>
<feature type="chain" id="PRO_0000129819" description="Small ribosomal subunit protein uS19">
    <location>
        <begin position="2"/>
        <end position="92"/>
    </location>
</feature>
<feature type="sequence variant" description="In MW145; suppresses a rimM deletion." evidence="5">
    <original>H</original>
    <variation>Y</variation>
    <location>
        <position position="83"/>
    </location>
</feature>
<feature type="sequence conflict" description="In Ref. 4; AA sequence." evidence="13" ref="4">
    <original>RSTIFPN</original>
    <variation>STIFPDR</variation>
    <location>
        <begin position="37"/>
        <end position="43"/>
    </location>
</feature>
<feature type="sequence conflict" description="In Ref. 4; AA sequence." evidence="13" ref="4">
    <original>D</original>
    <variation>N</variation>
    <location>
        <position position="86"/>
    </location>
</feature>
<feature type="helix" evidence="15">
    <location>
        <begin position="5"/>
        <end position="7"/>
    </location>
</feature>
<feature type="helix" evidence="15">
    <location>
        <begin position="13"/>
        <end position="25"/>
    </location>
</feature>
<feature type="strand" evidence="15">
    <location>
        <begin position="31"/>
        <end position="33"/>
    </location>
</feature>
<feature type="strand" evidence="14">
    <location>
        <begin position="37"/>
        <end position="39"/>
    </location>
</feature>
<feature type="helix" evidence="15">
    <location>
        <begin position="42"/>
        <end position="44"/>
    </location>
</feature>
<feature type="strand" evidence="15">
    <location>
        <begin position="48"/>
        <end position="52"/>
    </location>
</feature>
<feature type="strand" evidence="15">
    <location>
        <begin position="54"/>
        <end position="61"/>
    </location>
</feature>
<feature type="helix" evidence="15">
    <location>
        <begin position="64"/>
        <end position="66"/>
    </location>
</feature>
<feature type="strand" evidence="16">
    <location>
        <begin position="67"/>
        <end position="70"/>
    </location>
</feature>
<feature type="helix" evidence="15">
    <location>
        <begin position="71"/>
        <end position="74"/>
    </location>
</feature>
<evidence type="ECO:0000269" key="1">
    <source>
    </source>
</evidence>
<evidence type="ECO:0000269" key="2">
    <source>
    </source>
</evidence>
<evidence type="ECO:0000269" key="3">
    <source>
    </source>
</evidence>
<evidence type="ECO:0000269" key="4">
    <source>
    </source>
</evidence>
<evidence type="ECO:0000269" key="5">
    <source>
    </source>
</evidence>
<evidence type="ECO:0000269" key="6">
    <source>
    </source>
</evidence>
<evidence type="ECO:0000269" key="7">
    <source>
    </source>
</evidence>
<evidence type="ECO:0000269" key="8">
    <source>
    </source>
</evidence>
<evidence type="ECO:0000269" key="9">
    <source>
    </source>
</evidence>
<evidence type="ECO:0000269" key="10">
    <source>
    </source>
</evidence>
<evidence type="ECO:0000269" key="11">
    <source>
    </source>
</evidence>
<evidence type="ECO:0000303" key="12">
    <source>
    </source>
</evidence>
<evidence type="ECO:0000305" key="13"/>
<evidence type="ECO:0007829" key="14">
    <source>
        <dbReference type="PDB" id="7OE0"/>
    </source>
</evidence>
<evidence type="ECO:0007829" key="15">
    <source>
        <dbReference type="PDB" id="8CF1"/>
    </source>
</evidence>
<evidence type="ECO:0007829" key="16">
    <source>
        <dbReference type="PDB" id="8K4E"/>
    </source>
</evidence>